<name>PIM1_HUMAN</name>
<keyword id="KW-0002">3D-structure</keyword>
<keyword id="KW-0024">Alternative initiation</keyword>
<keyword id="KW-0053">Apoptosis</keyword>
<keyword id="KW-0067">ATP-binding</keyword>
<keyword id="KW-0131">Cell cycle</keyword>
<keyword id="KW-1003">Cell membrane</keyword>
<keyword id="KW-0963">Cytoplasm</keyword>
<keyword id="KW-0903">Direct protein sequencing</keyword>
<keyword id="KW-0945">Host-virus interaction</keyword>
<keyword id="KW-0418">Kinase</keyword>
<keyword id="KW-0460">Magnesium</keyword>
<keyword id="KW-0472">Membrane</keyword>
<keyword id="KW-0479">Metal-binding</keyword>
<keyword id="KW-0547">Nucleotide-binding</keyword>
<keyword id="KW-0539">Nucleus</keyword>
<keyword id="KW-0597">Phosphoprotein</keyword>
<keyword id="KW-1267">Proteomics identification</keyword>
<keyword id="KW-0656">Proto-oncogene</keyword>
<keyword id="KW-1185">Reference proteome</keyword>
<keyword id="KW-0723">Serine/threonine-protein kinase</keyword>
<keyword id="KW-0808">Transferase</keyword>
<keyword id="KW-0832">Ubl conjugation</keyword>
<evidence type="ECO:0000250" key="1">
    <source>
        <dbReference type="UniProtKB" id="P06803"/>
    </source>
</evidence>
<evidence type="ECO:0000255" key="2">
    <source>
        <dbReference type="PROSITE-ProRule" id="PRU00159"/>
    </source>
</evidence>
<evidence type="ECO:0000255" key="3">
    <source>
        <dbReference type="PROSITE-ProRule" id="PRU10027"/>
    </source>
</evidence>
<evidence type="ECO:0000269" key="4">
    <source>
    </source>
</evidence>
<evidence type="ECO:0000269" key="5">
    <source>
    </source>
</evidence>
<evidence type="ECO:0000269" key="6">
    <source>
    </source>
</evidence>
<evidence type="ECO:0000269" key="7">
    <source>
    </source>
</evidence>
<evidence type="ECO:0000269" key="8">
    <source>
    </source>
</evidence>
<evidence type="ECO:0000269" key="9">
    <source>
    </source>
</evidence>
<evidence type="ECO:0000269" key="10">
    <source>
    </source>
</evidence>
<evidence type="ECO:0000269" key="11">
    <source>
    </source>
</evidence>
<evidence type="ECO:0000269" key="12">
    <source>
    </source>
</evidence>
<evidence type="ECO:0000269" key="13">
    <source>
    </source>
</evidence>
<evidence type="ECO:0000269" key="14">
    <source>
    </source>
</evidence>
<evidence type="ECO:0000269" key="15">
    <source>
    </source>
</evidence>
<evidence type="ECO:0000269" key="16">
    <source>
    </source>
</evidence>
<evidence type="ECO:0000269" key="17">
    <source>
    </source>
</evidence>
<evidence type="ECO:0000269" key="18">
    <source>
    </source>
</evidence>
<evidence type="ECO:0000269" key="19">
    <source>
    </source>
</evidence>
<evidence type="ECO:0000269" key="20">
    <source>
    </source>
</evidence>
<evidence type="ECO:0000269" key="21">
    <source>
    </source>
</evidence>
<evidence type="ECO:0000303" key="22">
    <source>
    </source>
</evidence>
<evidence type="ECO:0000303" key="23">
    <source>
    </source>
</evidence>
<evidence type="ECO:0000305" key="24"/>
<evidence type="ECO:0000305" key="25">
    <source>
    </source>
</evidence>
<evidence type="ECO:0000305" key="26">
    <source>
    </source>
</evidence>
<evidence type="ECO:0000305" key="27">
    <source>
    </source>
</evidence>
<evidence type="ECO:0007744" key="28">
    <source>
    </source>
</evidence>
<evidence type="ECO:0007829" key="29">
    <source>
        <dbReference type="PDB" id="3A99"/>
    </source>
</evidence>
<evidence type="ECO:0007829" key="30">
    <source>
        <dbReference type="PDB" id="3C4E"/>
    </source>
</evidence>
<evidence type="ECO:0007829" key="31">
    <source>
        <dbReference type="PDB" id="3F2A"/>
    </source>
</evidence>
<evidence type="ECO:0007829" key="32">
    <source>
        <dbReference type="PDB" id="3VBQ"/>
    </source>
</evidence>
<evidence type="ECO:0007829" key="33">
    <source>
        <dbReference type="PDB" id="4ALW"/>
    </source>
</evidence>
<evidence type="ECO:0007829" key="34">
    <source>
        <dbReference type="PDB" id="7OOX"/>
    </source>
</evidence>
<dbReference type="EC" id="2.7.11.1" evidence="7 9 11 20"/>
<dbReference type="EMBL" id="M27903">
    <property type="protein sequence ID" value="AAA60090.1"/>
    <property type="molecule type" value="Genomic_DNA"/>
</dbReference>
<dbReference type="EMBL" id="M16750">
    <property type="protein sequence ID" value="AAA60089.1"/>
    <property type="molecule type" value="mRNA"/>
</dbReference>
<dbReference type="EMBL" id="M54915">
    <property type="protein sequence ID" value="AAA36447.1"/>
    <property type="molecule type" value="mRNA"/>
</dbReference>
<dbReference type="EMBL" id="M24779">
    <property type="protein sequence ID" value="AAA81553.1"/>
    <property type="molecule type" value="mRNA"/>
</dbReference>
<dbReference type="EMBL" id="DQ022562">
    <property type="protein sequence ID" value="AAY87461.1"/>
    <property type="molecule type" value="mRNA"/>
</dbReference>
<dbReference type="EMBL" id="AL353579">
    <property type="status" value="NOT_ANNOTATED_CDS"/>
    <property type="molecule type" value="Genomic_DNA"/>
</dbReference>
<dbReference type="EMBL" id="CH471081">
    <property type="protein sequence ID" value="EAX03934.1"/>
    <property type="molecule type" value="Genomic_DNA"/>
</dbReference>
<dbReference type="EMBL" id="BC020224">
    <property type="protein sequence ID" value="AAH20224.1"/>
    <property type="molecule type" value="mRNA"/>
</dbReference>
<dbReference type="EMBL" id="AF386792">
    <property type="protein sequence ID" value="AAK70871.1"/>
    <property type="molecule type" value="Genomic_DNA"/>
</dbReference>
<dbReference type="CCDS" id="CCDS4830.1">
    <molecule id="P11309-1"/>
</dbReference>
<dbReference type="PIR" id="JU0327">
    <property type="entry name" value="TVHUP1"/>
</dbReference>
<dbReference type="RefSeq" id="NP_001230115.1">
    <molecule id="P11309-2"/>
    <property type="nucleotide sequence ID" value="NM_001243186.2"/>
</dbReference>
<dbReference type="RefSeq" id="NP_002639.1">
    <molecule id="P11309-1"/>
    <property type="nucleotide sequence ID" value="NM_002648.4"/>
</dbReference>
<dbReference type="PDB" id="1XQZ">
    <property type="method" value="X-ray"/>
    <property type="resolution" value="2.10 A"/>
    <property type="chains" value="A=14-313"/>
</dbReference>
<dbReference type="PDB" id="1XR1">
    <property type="method" value="X-ray"/>
    <property type="resolution" value="2.10 A"/>
    <property type="chains" value="A=14-313"/>
</dbReference>
<dbReference type="PDB" id="1XWS">
    <property type="method" value="X-ray"/>
    <property type="resolution" value="1.80 A"/>
    <property type="chains" value="A=1-313"/>
</dbReference>
<dbReference type="PDB" id="1YHS">
    <property type="method" value="X-ray"/>
    <property type="resolution" value="2.15 A"/>
    <property type="chains" value="A=33-305"/>
</dbReference>
<dbReference type="PDB" id="1YI3">
    <property type="method" value="X-ray"/>
    <property type="resolution" value="2.50 A"/>
    <property type="chains" value="A=33-305"/>
</dbReference>
<dbReference type="PDB" id="1YI4">
    <property type="method" value="X-ray"/>
    <property type="resolution" value="2.40 A"/>
    <property type="chains" value="A=33-305"/>
</dbReference>
<dbReference type="PDB" id="1YWV">
    <property type="method" value="X-ray"/>
    <property type="resolution" value="2.00 A"/>
    <property type="chains" value="A=29-313"/>
</dbReference>
<dbReference type="PDB" id="1YXS">
    <property type="method" value="X-ray"/>
    <property type="resolution" value="2.20 A"/>
    <property type="chains" value="A=29-313"/>
</dbReference>
<dbReference type="PDB" id="1YXT">
    <property type="method" value="X-ray"/>
    <property type="resolution" value="2.00 A"/>
    <property type="chains" value="A=29-313"/>
</dbReference>
<dbReference type="PDB" id="1YXU">
    <property type="method" value="X-ray"/>
    <property type="resolution" value="2.24 A"/>
    <property type="chains" value="A/B/C/D=29-313"/>
</dbReference>
<dbReference type="PDB" id="1YXV">
    <property type="method" value="X-ray"/>
    <property type="resolution" value="2.00 A"/>
    <property type="chains" value="A=29-313"/>
</dbReference>
<dbReference type="PDB" id="1YXX">
    <property type="method" value="X-ray"/>
    <property type="resolution" value="2.00 A"/>
    <property type="chains" value="A=29-313"/>
</dbReference>
<dbReference type="PDB" id="2BIK">
    <property type="method" value="X-ray"/>
    <property type="resolution" value="1.80 A"/>
    <property type="chains" value="B=1-313"/>
</dbReference>
<dbReference type="PDB" id="2BIL">
    <property type="method" value="X-ray"/>
    <property type="resolution" value="2.55 A"/>
    <property type="chains" value="B=1-313"/>
</dbReference>
<dbReference type="PDB" id="2BZH">
    <property type="method" value="X-ray"/>
    <property type="resolution" value="1.90 A"/>
    <property type="chains" value="B=1-313"/>
</dbReference>
<dbReference type="PDB" id="2BZI">
    <property type="method" value="X-ray"/>
    <property type="resolution" value="1.90 A"/>
    <property type="chains" value="B=1-313"/>
</dbReference>
<dbReference type="PDB" id="2BZJ">
    <property type="method" value="X-ray"/>
    <property type="resolution" value="2.05 A"/>
    <property type="chains" value="A=1-313"/>
</dbReference>
<dbReference type="PDB" id="2BZK">
    <property type="method" value="X-ray"/>
    <property type="resolution" value="2.45 A"/>
    <property type="chains" value="B=1-313"/>
</dbReference>
<dbReference type="PDB" id="2C3I">
    <property type="method" value="X-ray"/>
    <property type="resolution" value="1.90 A"/>
    <property type="chains" value="B=1-313"/>
</dbReference>
<dbReference type="PDB" id="2J2I">
    <property type="method" value="X-ray"/>
    <property type="resolution" value="1.90 A"/>
    <property type="chains" value="B=1-312"/>
</dbReference>
<dbReference type="PDB" id="2O3P">
    <property type="method" value="X-ray"/>
    <property type="resolution" value="2.24 A"/>
    <property type="chains" value="A=29-313"/>
</dbReference>
<dbReference type="PDB" id="2O63">
    <property type="method" value="X-ray"/>
    <property type="resolution" value="2.00 A"/>
    <property type="chains" value="A=29-313"/>
</dbReference>
<dbReference type="PDB" id="2O64">
    <property type="method" value="X-ray"/>
    <property type="resolution" value="2.44 A"/>
    <property type="chains" value="A=29-313"/>
</dbReference>
<dbReference type="PDB" id="2O65">
    <property type="method" value="X-ray"/>
    <property type="resolution" value="2.85 A"/>
    <property type="chains" value="A=29-313"/>
</dbReference>
<dbReference type="PDB" id="2OBJ">
    <property type="method" value="X-ray"/>
    <property type="resolution" value="2.50 A"/>
    <property type="chains" value="A=1-313"/>
</dbReference>
<dbReference type="PDB" id="2OI4">
    <property type="method" value="X-ray"/>
    <property type="resolution" value="2.20 A"/>
    <property type="chains" value="X=1-313"/>
</dbReference>
<dbReference type="PDB" id="2XIX">
    <property type="method" value="X-ray"/>
    <property type="resolution" value="2.40 A"/>
    <property type="chains" value="A=14-313"/>
</dbReference>
<dbReference type="PDB" id="2XIY">
    <property type="method" value="X-ray"/>
    <property type="resolution" value="2.20 A"/>
    <property type="chains" value="A=14-313"/>
</dbReference>
<dbReference type="PDB" id="2XIZ">
    <property type="method" value="X-ray"/>
    <property type="resolution" value="2.21 A"/>
    <property type="chains" value="A=14-313"/>
</dbReference>
<dbReference type="PDB" id="2XJ0">
    <property type="method" value="X-ray"/>
    <property type="resolution" value="3.10 A"/>
    <property type="chains" value="A=14-313"/>
</dbReference>
<dbReference type="PDB" id="2XJ1">
    <property type="method" value="X-ray"/>
    <property type="resolution" value="2.13 A"/>
    <property type="chains" value="A=14-313"/>
</dbReference>
<dbReference type="PDB" id="2XJ2">
    <property type="method" value="X-ray"/>
    <property type="resolution" value="2.20 A"/>
    <property type="chains" value="A=14-313"/>
</dbReference>
<dbReference type="PDB" id="3A99">
    <property type="method" value="X-ray"/>
    <property type="resolution" value="1.60 A"/>
    <property type="chains" value="A=15-313"/>
</dbReference>
<dbReference type="PDB" id="3BGP">
    <property type="method" value="X-ray"/>
    <property type="resolution" value="2.80 A"/>
    <property type="chains" value="A=1-313"/>
</dbReference>
<dbReference type="PDB" id="3BGQ">
    <property type="method" value="X-ray"/>
    <property type="resolution" value="2.00 A"/>
    <property type="chains" value="A=1-313"/>
</dbReference>
<dbReference type="PDB" id="3BGZ">
    <property type="method" value="X-ray"/>
    <property type="resolution" value="2.40 A"/>
    <property type="chains" value="A=1-313"/>
</dbReference>
<dbReference type="PDB" id="3BWF">
    <property type="method" value="X-ray"/>
    <property type="resolution" value="2.35 A"/>
    <property type="chains" value="A=1-313"/>
</dbReference>
<dbReference type="PDB" id="3C4E">
    <property type="method" value="X-ray"/>
    <property type="resolution" value="1.98 A"/>
    <property type="chains" value="A/B/C/D=33-305"/>
</dbReference>
<dbReference type="PDB" id="3CXW">
    <property type="method" value="X-ray"/>
    <property type="resolution" value="2.10 A"/>
    <property type="chains" value="A=1-313"/>
</dbReference>
<dbReference type="PDB" id="3CY2">
    <property type="method" value="X-ray"/>
    <property type="resolution" value="2.01 A"/>
    <property type="chains" value="A=1-313"/>
</dbReference>
<dbReference type="PDB" id="3CY3">
    <property type="method" value="X-ray"/>
    <property type="resolution" value="2.15 A"/>
    <property type="chains" value="A=1-313"/>
</dbReference>
<dbReference type="PDB" id="3DCV">
    <property type="method" value="X-ray"/>
    <property type="resolution" value="2.70 A"/>
    <property type="chains" value="A=2-313"/>
</dbReference>
<dbReference type="PDB" id="3F2A">
    <property type="method" value="X-ray"/>
    <property type="resolution" value="1.90 A"/>
    <property type="chains" value="A=14-313"/>
</dbReference>
<dbReference type="PDB" id="3JPV">
    <property type="method" value="X-ray"/>
    <property type="resolution" value="2.35 A"/>
    <property type="chains" value="A=1-312"/>
</dbReference>
<dbReference type="PDB" id="3JXW">
    <property type="method" value="X-ray"/>
    <property type="resolution" value="2.80 A"/>
    <property type="chains" value="A=29-313"/>
</dbReference>
<dbReference type="PDB" id="3JY0">
    <property type="method" value="X-ray"/>
    <property type="resolution" value="2.40 A"/>
    <property type="chains" value="A=29-313"/>
</dbReference>
<dbReference type="PDB" id="3JYA">
    <property type="method" value="X-ray"/>
    <property type="resolution" value="2.10 A"/>
    <property type="chains" value="A=29-313"/>
</dbReference>
<dbReference type="PDB" id="3MA3">
    <property type="method" value="X-ray"/>
    <property type="resolution" value="2.30 A"/>
    <property type="chains" value="A=2-312"/>
</dbReference>
<dbReference type="PDB" id="3QF9">
    <property type="method" value="X-ray"/>
    <property type="resolution" value="2.20 A"/>
    <property type="chains" value="A=1-312"/>
</dbReference>
<dbReference type="PDB" id="3R00">
    <property type="method" value="X-ray"/>
    <property type="resolution" value="2.10 A"/>
    <property type="chains" value="A=29-313"/>
</dbReference>
<dbReference type="PDB" id="3R01">
    <property type="method" value="X-ray"/>
    <property type="resolution" value="2.60 A"/>
    <property type="chains" value="A=29-313"/>
</dbReference>
<dbReference type="PDB" id="3R02">
    <property type="method" value="X-ray"/>
    <property type="resolution" value="1.95 A"/>
    <property type="chains" value="A=29-313"/>
</dbReference>
<dbReference type="PDB" id="3R04">
    <property type="method" value="X-ray"/>
    <property type="resolution" value="1.70 A"/>
    <property type="chains" value="A=29-313"/>
</dbReference>
<dbReference type="PDB" id="3T9I">
    <property type="method" value="X-ray"/>
    <property type="resolution" value="2.60 A"/>
    <property type="chains" value="A=2-313"/>
</dbReference>
<dbReference type="PDB" id="3UIX">
    <property type="method" value="X-ray"/>
    <property type="resolution" value="2.20 A"/>
    <property type="chains" value="A=29-313"/>
</dbReference>
<dbReference type="PDB" id="3UMW">
    <property type="method" value="X-ray"/>
    <property type="resolution" value="2.08 A"/>
    <property type="chains" value="A=29-313"/>
</dbReference>
<dbReference type="PDB" id="3UMX">
    <property type="method" value="X-ray"/>
    <property type="resolution" value="2.55 A"/>
    <property type="chains" value="A=29-313"/>
</dbReference>
<dbReference type="PDB" id="3VBQ">
    <property type="method" value="X-ray"/>
    <property type="resolution" value="1.85 A"/>
    <property type="chains" value="A=29-313"/>
</dbReference>
<dbReference type="PDB" id="3VBT">
    <property type="method" value="X-ray"/>
    <property type="resolution" value="2.23 A"/>
    <property type="chains" value="A=29-313"/>
</dbReference>
<dbReference type="PDB" id="3VBV">
    <property type="method" value="X-ray"/>
    <property type="resolution" value="2.08 A"/>
    <property type="chains" value="A=29-313"/>
</dbReference>
<dbReference type="PDB" id="3VBW">
    <property type="method" value="X-ray"/>
    <property type="resolution" value="2.48 A"/>
    <property type="chains" value="A=29-313"/>
</dbReference>
<dbReference type="PDB" id="3VBX">
    <property type="method" value="X-ray"/>
    <property type="resolution" value="2.03 A"/>
    <property type="chains" value="A=29-313"/>
</dbReference>
<dbReference type="PDB" id="3VBY">
    <property type="method" value="X-ray"/>
    <property type="resolution" value="2.27 A"/>
    <property type="chains" value="A=29-313"/>
</dbReference>
<dbReference type="PDB" id="3VC4">
    <property type="method" value="X-ray"/>
    <property type="resolution" value="2.23 A"/>
    <property type="chains" value="A=29-313"/>
</dbReference>
<dbReference type="PDB" id="3WE8">
    <property type="method" value="X-ray"/>
    <property type="resolution" value="1.95 A"/>
    <property type="chains" value="A=33-305"/>
</dbReference>
<dbReference type="PDB" id="4A7C">
    <property type="method" value="X-ray"/>
    <property type="resolution" value="2.30 A"/>
    <property type="chains" value="A=30-313"/>
</dbReference>
<dbReference type="PDB" id="4ALU">
    <property type="method" value="X-ray"/>
    <property type="resolution" value="2.60 A"/>
    <property type="chains" value="A=2-313"/>
</dbReference>
<dbReference type="PDB" id="4ALV">
    <property type="method" value="X-ray"/>
    <property type="resolution" value="2.59 A"/>
    <property type="chains" value="A=2-313"/>
</dbReference>
<dbReference type="PDB" id="4ALW">
    <property type="method" value="X-ray"/>
    <property type="resolution" value="1.92 A"/>
    <property type="chains" value="A=2-313"/>
</dbReference>
<dbReference type="PDB" id="4AS0">
    <property type="method" value="X-ray"/>
    <property type="resolution" value="2.30 A"/>
    <property type="chains" value="A=33-305"/>
</dbReference>
<dbReference type="PDB" id="4BZN">
    <property type="method" value="X-ray"/>
    <property type="resolution" value="1.90 A"/>
    <property type="chains" value="A=2-313"/>
</dbReference>
<dbReference type="PDB" id="4BZO">
    <property type="method" value="X-ray"/>
    <property type="resolution" value="2.10 A"/>
    <property type="chains" value="A=2-313"/>
</dbReference>
<dbReference type="PDB" id="4DTK">
    <property type="method" value="X-ray"/>
    <property type="resolution" value="1.86 A"/>
    <property type="chains" value="A=30-305"/>
</dbReference>
<dbReference type="PDB" id="4ENX">
    <property type="method" value="X-ray"/>
    <property type="resolution" value="2.80 A"/>
    <property type="chains" value="A=29-313"/>
</dbReference>
<dbReference type="PDB" id="4ENY">
    <property type="method" value="X-ray"/>
    <property type="resolution" value="2.80 A"/>
    <property type="chains" value="A=29-313"/>
</dbReference>
<dbReference type="PDB" id="4GW8">
    <property type="method" value="X-ray"/>
    <property type="resolution" value="2.00 A"/>
    <property type="chains" value="A=1-312"/>
</dbReference>
<dbReference type="PDB" id="4I41">
    <property type="method" value="X-ray"/>
    <property type="resolution" value="2.70 A"/>
    <property type="chains" value="A=29-305"/>
</dbReference>
<dbReference type="PDB" id="4IAA">
    <property type="method" value="X-ray"/>
    <property type="resolution" value="2.85 A"/>
    <property type="chains" value="A=29-313"/>
</dbReference>
<dbReference type="PDB" id="4JX3">
    <property type="method" value="X-ray"/>
    <property type="resolution" value="2.50 A"/>
    <property type="chains" value="A=1-313"/>
</dbReference>
<dbReference type="PDB" id="4JX7">
    <property type="method" value="X-ray"/>
    <property type="resolution" value="2.40 A"/>
    <property type="chains" value="A=1-313"/>
</dbReference>
<dbReference type="PDB" id="4K0Y">
    <property type="method" value="X-ray"/>
    <property type="resolution" value="1.95 A"/>
    <property type="chains" value="A=33-306"/>
</dbReference>
<dbReference type="PDB" id="4K18">
    <property type="method" value="X-ray"/>
    <property type="resolution" value="2.05 A"/>
    <property type="chains" value="A=32-308"/>
</dbReference>
<dbReference type="PDB" id="4K1B">
    <property type="method" value="X-ray"/>
    <property type="resolution" value="2.08 A"/>
    <property type="chains" value="A=33-305"/>
</dbReference>
<dbReference type="PDB" id="4LL5">
    <property type="method" value="X-ray"/>
    <property type="resolution" value="2.00 A"/>
    <property type="chains" value="A=29-313"/>
</dbReference>
<dbReference type="PDB" id="4LM5">
    <property type="method" value="X-ray"/>
    <property type="resolution" value="2.25 A"/>
    <property type="chains" value="A=29-313"/>
</dbReference>
<dbReference type="PDB" id="4LMU">
    <property type="method" value="X-ray"/>
    <property type="resolution" value="2.38 A"/>
    <property type="chains" value="A=29-313"/>
</dbReference>
<dbReference type="PDB" id="4MBI">
    <property type="method" value="X-ray"/>
    <property type="resolution" value="2.30 A"/>
    <property type="chains" value="A=29-313"/>
</dbReference>
<dbReference type="PDB" id="4MBL">
    <property type="method" value="X-ray"/>
    <property type="resolution" value="2.60 A"/>
    <property type="chains" value="A=29-313"/>
</dbReference>
<dbReference type="PDB" id="4MTA">
    <property type="method" value="X-ray"/>
    <property type="resolution" value="2.20 A"/>
    <property type="chains" value="A=28-313"/>
</dbReference>
<dbReference type="PDB" id="4N6Y">
    <property type="method" value="X-ray"/>
    <property type="resolution" value="2.60 A"/>
    <property type="chains" value="A=2-313"/>
</dbReference>
<dbReference type="PDB" id="4N6Z">
    <property type="method" value="X-ray"/>
    <property type="resolution" value="2.20 A"/>
    <property type="chains" value="A=2-313"/>
</dbReference>
<dbReference type="PDB" id="4N70">
    <property type="method" value="X-ray"/>
    <property type="resolution" value="2.10 A"/>
    <property type="chains" value="A=2-313"/>
</dbReference>
<dbReference type="PDB" id="4RBL">
    <property type="method" value="X-ray"/>
    <property type="resolution" value="2.55 A"/>
    <property type="chains" value="A=29-313"/>
</dbReference>
<dbReference type="PDB" id="4RC2">
    <property type="method" value="X-ray"/>
    <property type="resolution" value="2.10 A"/>
    <property type="chains" value="A=29-313"/>
</dbReference>
<dbReference type="PDB" id="4RC3">
    <property type="method" value="X-ray"/>
    <property type="resolution" value="2.34 A"/>
    <property type="chains" value="A=29-313"/>
</dbReference>
<dbReference type="PDB" id="4RC4">
    <property type="method" value="X-ray"/>
    <property type="resolution" value="2.65 A"/>
    <property type="chains" value="A=29-313"/>
</dbReference>
<dbReference type="PDB" id="4RPV">
    <property type="method" value="X-ray"/>
    <property type="resolution" value="3.05 A"/>
    <property type="chains" value="A=1-313"/>
</dbReference>
<dbReference type="PDB" id="4TY1">
    <property type="method" value="X-ray"/>
    <property type="resolution" value="2.70 A"/>
    <property type="chains" value="A=33-305"/>
</dbReference>
<dbReference type="PDB" id="4WRS">
    <property type="method" value="X-ray"/>
    <property type="resolution" value="2.20 A"/>
    <property type="chains" value="A=33-305"/>
</dbReference>
<dbReference type="PDB" id="4WSY">
    <property type="method" value="X-ray"/>
    <property type="resolution" value="2.30 A"/>
    <property type="chains" value="A=33-305"/>
</dbReference>
<dbReference type="PDB" id="4WT6">
    <property type="method" value="X-ray"/>
    <property type="resolution" value="2.30 A"/>
    <property type="chains" value="A=33-305"/>
</dbReference>
<dbReference type="PDB" id="4XH6">
    <property type="method" value="X-ray"/>
    <property type="resolution" value="2.04 A"/>
    <property type="chains" value="A=29-313"/>
</dbReference>
<dbReference type="PDB" id="4XHK">
    <property type="method" value="X-ray"/>
    <property type="resolution" value="1.90 A"/>
    <property type="chains" value="B=1-313"/>
</dbReference>
<dbReference type="PDB" id="5C1Q">
    <property type="method" value="X-ray"/>
    <property type="resolution" value="3.00 A"/>
    <property type="chains" value="B=29-313"/>
</dbReference>
<dbReference type="PDB" id="5DGZ">
    <property type="method" value="X-ray"/>
    <property type="resolution" value="2.50 A"/>
    <property type="chains" value="A=29-313"/>
</dbReference>
<dbReference type="PDB" id="5DHJ">
    <property type="method" value="X-ray"/>
    <property type="resolution" value="2.46 A"/>
    <property type="chains" value="A=29-313"/>
</dbReference>
<dbReference type="PDB" id="5DIA">
    <property type="method" value="X-ray"/>
    <property type="resolution" value="1.96 A"/>
    <property type="chains" value="A=29-313"/>
</dbReference>
<dbReference type="PDB" id="5DWR">
    <property type="method" value="X-ray"/>
    <property type="resolution" value="2.00 A"/>
    <property type="chains" value="A=2-313"/>
</dbReference>
<dbReference type="PDB" id="5EOL">
    <property type="method" value="X-ray"/>
    <property type="resolution" value="2.20 A"/>
    <property type="chains" value="A=33-305"/>
</dbReference>
<dbReference type="PDB" id="5IIS">
    <property type="method" value="X-ray"/>
    <property type="resolution" value="2.10 A"/>
    <property type="chains" value="A=32-308"/>
</dbReference>
<dbReference type="PDB" id="5IPJ">
    <property type="method" value="X-ray"/>
    <property type="resolution" value="2.10 A"/>
    <property type="chains" value="A=33-305"/>
</dbReference>
<dbReference type="PDB" id="5KCX">
    <property type="method" value="X-ray"/>
    <property type="resolution" value="2.20 A"/>
    <property type="chains" value="A=29-313"/>
</dbReference>
<dbReference type="PDB" id="5KGD">
    <property type="method" value="X-ray"/>
    <property type="resolution" value="1.98 A"/>
    <property type="chains" value="A=30-305"/>
</dbReference>
<dbReference type="PDB" id="5KGE">
    <property type="method" value="X-ray"/>
    <property type="resolution" value="2.23 A"/>
    <property type="chains" value="A=30-305"/>
</dbReference>
<dbReference type="PDB" id="5KGG">
    <property type="method" value="X-ray"/>
    <property type="resolution" value="1.95 A"/>
    <property type="chains" value="A=30-305"/>
</dbReference>
<dbReference type="PDB" id="5KGI">
    <property type="method" value="X-ray"/>
    <property type="resolution" value="2.13 A"/>
    <property type="chains" value="A=30-305"/>
</dbReference>
<dbReference type="PDB" id="5KGK">
    <property type="method" value="X-ray"/>
    <property type="resolution" value="2.66 A"/>
    <property type="chains" value="A=30-305"/>
</dbReference>
<dbReference type="PDB" id="5KZI">
    <property type="method" value="X-ray"/>
    <property type="resolution" value="2.10 A"/>
    <property type="chains" value="A=33-305"/>
</dbReference>
<dbReference type="PDB" id="5MZL">
    <property type="method" value="X-ray"/>
    <property type="resolution" value="1.96 A"/>
    <property type="chains" value="A=1-313"/>
</dbReference>
<dbReference type="PDB" id="5N4N">
    <property type="method" value="X-ray"/>
    <property type="resolution" value="2.09 A"/>
    <property type="chains" value="A=1-313"/>
</dbReference>
<dbReference type="PDB" id="5N4O">
    <property type="method" value="X-ray"/>
    <property type="resolution" value="2.22 A"/>
    <property type="chains" value="A=1-313"/>
</dbReference>
<dbReference type="PDB" id="5N4R">
    <property type="method" value="X-ray"/>
    <property type="resolution" value="2.13 A"/>
    <property type="chains" value="A=1-313"/>
</dbReference>
<dbReference type="PDB" id="5N4U">
    <property type="method" value="X-ray"/>
    <property type="resolution" value="2.20 A"/>
    <property type="chains" value="A=1-313"/>
</dbReference>
<dbReference type="PDB" id="5N4V">
    <property type="method" value="X-ray"/>
    <property type="resolution" value="1.85 A"/>
    <property type="chains" value="A=1-313"/>
</dbReference>
<dbReference type="PDB" id="5N4X">
    <property type="method" value="X-ray"/>
    <property type="resolution" value="2.20 A"/>
    <property type="chains" value="A=1-313"/>
</dbReference>
<dbReference type="PDB" id="5N4Y">
    <property type="method" value="X-ray"/>
    <property type="resolution" value="2.56 A"/>
    <property type="chains" value="A=1-313"/>
</dbReference>
<dbReference type="PDB" id="5N4Z">
    <property type="method" value="X-ray"/>
    <property type="resolution" value="2.26 A"/>
    <property type="chains" value="A=1-313"/>
</dbReference>
<dbReference type="PDB" id="5N50">
    <property type="method" value="X-ray"/>
    <property type="resolution" value="1.92 A"/>
    <property type="chains" value="A=1-313"/>
</dbReference>
<dbReference type="PDB" id="5N51">
    <property type="method" value="X-ray"/>
    <property type="resolution" value="2.12 A"/>
    <property type="chains" value="A=1-313"/>
</dbReference>
<dbReference type="PDB" id="5N52">
    <property type="method" value="X-ray"/>
    <property type="resolution" value="2.25 A"/>
    <property type="chains" value="A=1-313"/>
</dbReference>
<dbReference type="PDB" id="5N5L">
    <property type="method" value="X-ray"/>
    <property type="resolution" value="1.97 A"/>
    <property type="chains" value="A=1-313"/>
</dbReference>
<dbReference type="PDB" id="5N5M">
    <property type="method" value="X-ray"/>
    <property type="resolution" value="2.21 A"/>
    <property type="chains" value="A=1-313"/>
</dbReference>
<dbReference type="PDB" id="5NDT">
    <property type="method" value="X-ray"/>
    <property type="resolution" value="1.99 A"/>
    <property type="chains" value="A=1-313"/>
</dbReference>
<dbReference type="PDB" id="5O11">
    <property type="method" value="X-ray"/>
    <property type="resolution" value="2.40 A"/>
    <property type="chains" value="A=29-313"/>
</dbReference>
<dbReference type="PDB" id="5O12">
    <property type="method" value="X-ray"/>
    <property type="resolution" value="2.40 A"/>
    <property type="chains" value="A=29-313"/>
</dbReference>
<dbReference type="PDB" id="5O13">
    <property type="method" value="X-ray"/>
    <property type="resolution" value="2.44 A"/>
    <property type="chains" value="A=29-313"/>
</dbReference>
<dbReference type="PDB" id="5TEL">
    <property type="method" value="X-ray"/>
    <property type="resolution" value="2.21 A"/>
    <property type="chains" value="A=33-306"/>
</dbReference>
<dbReference type="PDB" id="5TEX">
    <property type="method" value="X-ray"/>
    <property type="resolution" value="2.15 A"/>
    <property type="chains" value="A=33-306"/>
</dbReference>
<dbReference type="PDB" id="5TOE">
    <property type="method" value="X-ray"/>
    <property type="resolution" value="2.30 A"/>
    <property type="chains" value="A=34-306"/>
</dbReference>
<dbReference type="PDB" id="5TUR">
    <property type="method" value="X-ray"/>
    <property type="resolution" value="2.95 A"/>
    <property type="chains" value="A=1-313"/>
</dbReference>
<dbReference type="PDB" id="5V80">
    <property type="method" value="X-ray"/>
    <property type="resolution" value="2.25 A"/>
    <property type="chains" value="A=29-313"/>
</dbReference>
<dbReference type="PDB" id="5V82">
    <property type="method" value="X-ray"/>
    <property type="resolution" value="1.89 A"/>
    <property type="chains" value="A=29-313"/>
</dbReference>
<dbReference type="PDB" id="5VUA">
    <property type="method" value="X-ray"/>
    <property type="resolution" value="2.20 A"/>
    <property type="chains" value="B=29-313"/>
</dbReference>
<dbReference type="PDB" id="5VUB">
    <property type="method" value="X-ray"/>
    <property type="resolution" value="2.00 A"/>
    <property type="chains" value="B=29-313"/>
</dbReference>
<dbReference type="PDB" id="5VUC">
    <property type="method" value="X-ray"/>
    <property type="resolution" value="2.00 A"/>
    <property type="chains" value="B=29-313"/>
</dbReference>
<dbReference type="PDB" id="6AYD">
    <property type="method" value="X-ray"/>
    <property type="resolution" value="3.00 A"/>
    <property type="chains" value="A=1-312"/>
</dbReference>
<dbReference type="PDB" id="6BSK">
    <property type="method" value="X-ray"/>
    <property type="resolution" value="2.57 A"/>
    <property type="chains" value="A=30-305"/>
</dbReference>
<dbReference type="PDB" id="6KZI">
    <property type="method" value="X-ray"/>
    <property type="resolution" value="2.80 A"/>
    <property type="chains" value="A=29-313"/>
</dbReference>
<dbReference type="PDB" id="6L11">
    <property type="method" value="X-ray"/>
    <property type="resolution" value="2.05 A"/>
    <property type="chains" value="A=29-313"/>
</dbReference>
<dbReference type="PDB" id="6L12">
    <property type="method" value="X-ray"/>
    <property type="resolution" value="1.87 A"/>
    <property type="chains" value="A=29-313"/>
</dbReference>
<dbReference type="PDB" id="6L13">
    <property type="method" value="X-ray"/>
    <property type="resolution" value="2.24 A"/>
    <property type="chains" value="A=29-313"/>
</dbReference>
<dbReference type="PDB" id="6L14">
    <property type="method" value="X-ray"/>
    <property type="resolution" value="1.95 A"/>
    <property type="chains" value="A=29-313"/>
</dbReference>
<dbReference type="PDB" id="6L15">
    <property type="method" value="X-ray"/>
    <property type="resolution" value="2.60 A"/>
    <property type="chains" value="A=29-313"/>
</dbReference>
<dbReference type="PDB" id="6L16">
    <property type="method" value="X-ray"/>
    <property type="resolution" value="2.10 A"/>
    <property type="chains" value="A=29-313"/>
</dbReference>
<dbReference type="PDB" id="6L17">
    <property type="method" value="X-ray"/>
    <property type="resolution" value="1.75 A"/>
    <property type="chains" value="A=29-313"/>
</dbReference>
<dbReference type="PDB" id="6MT0">
    <property type="method" value="X-ray"/>
    <property type="resolution" value="2.20 A"/>
    <property type="chains" value="A=33-305"/>
</dbReference>
<dbReference type="PDB" id="6NO8">
    <property type="method" value="X-ray"/>
    <property type="resolution" value="2.38 A"/>
    <property type="chains" value="A=33-305"/>
</dbReference>
<dbReference type="PDB" id="6NO9">
    <property type="method" value="X-ray"/>
    <property type="resolution" value="1.71 A"/>
    <property type="chains" value="A=33-305"/>
</dbReference>
<dbReference type="PDB" id="6PCW">
    <property type="method" value="X-ray"/>
    <property type="resolution" value="2.20 A"/>
    <property type="chains" value="A=1-312"/>
</dbReference>
<dbReference type="PDB" id="6PDI">
    <property type="method" value="X-ray"/>
    <property type="resolution" value="1.85 A"/>
    <property type="chains" value="A=1-312"/>
</dbReference>
<dbReference type="PDB" id="6PDN">
    <property type="method" value="X-ray"/>
    <property type="resolution" value="2.40 A"/>
    <property type="chains" value="A=1-312"/>
</dbReference>
<dbReference type="PDB" id="6PDO">
    <property type="method" value="X-ray"/>
    <property type="resolution" value="2.40 A"/>
    <property type="chains" value="A=1-312"/>
</dbReference>
<dbReference type="PDB" id="6PDP">
    <property type="method" value="X-ray"/>
    <property type="resolution" value="2.50 A"/>
    <property type="chains" value="A=1-312"/>
</dbReference>
<dbReference type="PDB" id="6QXK">
    <property type="method" value="X-ray"/>
    <property type="resolution" value="2.10 A"/>
    <property type="chains" value="B=1-312"/>
</dbReference>
<dbReference type="PDB" id="6VRU">
    <property type="method" value="X-ray"/>
    <property type="resolution" value="2.07 A"/>
    <property type="chains" value="A=33-306"/>
</dbReference>
<dbReference type="PDB" id="6VRV">
    <property type="method" value="X-ray"/>
    <property type="resolution" value="1.74 A"/>
    <property type="chains" value="A=33-306"/>
</dbReference>
<dbReference type="PDB" id="6YKD">
    <property type="method" value="X-ray"/>
    <property type="resolution" value="1.86 A"/>
    <property type="chains" value="A=1-313"/>
</dbReference>
<dbReference type="PDB" id="7OOV">
    <property type="method" value="X-ray"/>
    <property type="resolution" value="1.96 A"/>
    <property type="chains" value="A=1-312"/>
</dbReference>
<dbReference type="PDB" id="7OOW">
    <property type="method" value="X-ray"/>
    <property type="resolution" value="1.95 A"/>
    <property type="chains" value="A=1-312"/>
</dbReference>
<dbReference type="PDB" id="7OOX">
    <property type="method" value="X-ray"/>
    <property type="resolution" value="1.97 A"/>
    <property type="chains" value="A=1-312"/>
</dbReference>
<dbReference type="PDB" id="7QB2">
    <property type="method" value="X-ray"/>
    <property type="resolution" value="2.53 A"/>
    <property type="chains" value="A=1-312"/>
</dbReference>
<dbReference type="PDB" id="7QFM">
    <property type="method" value="X-ray"/>
    <property type="resolution" value="1.95 A"/>
    <property type="chains" value="A=1-312"/>
</dbReference>
<dbReference type="PDB" id="7VSY">
    <property type="method" value="X-ray"/>
    <property type="resolution" value="2.14 A"/>
    <property type="chains" value="A=1-313"/>
</dbReference>
<dbReference type="PDB" id="7XSV">
    <property type="method" value="X-ray"/>
    <property type="resolution" value="2.66 A"/>
    <property type="chains" value="A=29-313"/>
</dbReference>
<dbReference type="PDB" id="7Z6U">
    <property type="method" value="X-ray"/>
    <property type="resolution" value="2.28 A"/>
    <property type="chains" value="A=1-313"/>
</dbReference>
<dbReference type="PDB" id="7ZUN">
    <property type="method" value="X-ray"/>
    <property type="resolution" value="2.50 A"/>
    <property type="chains" value="A=2-313"/>
</dbReference>
<dbReference type="PDB" id="8AFR">
    <property type="method" value="X-ray"/>
    <property type="resolution" value="2.15 A"/>
    <property type="chains" value="A=1-312"/>
</dbReference>
<dbReference type="PDB" id="8R0H">
    <property type="method" value="X-ray"/>
    <property type="resolution" value="1.88 A"/>
    <property type="chains" value="A=1-312"/>
</dbReference>
<dbReference type="PDB" id="8R0Q">
    <property type="method" value="X-ray"/>
    <property type="resolution" value="1.70 A"/>
    <property type="chains" value="A=1-312"/>
</dbReference>
<dbReference type="PDB" id="8R0W">
    <property type="method" value="X-ray"/>
    <property type="resolution" value="1.95 A"/>
    <property type="chains" value="A=1-312"/>
</dbReference>
<dbReference type="PDB" id="8R0Y">
    <property type="method" value="X-ray"/>
    <property type="resolution" value="2.05 A"/>
    <property type="chains" value="A=1-312"/>
</dbReference>
<dbReference type="PDB" id="8R10">
    <property type="method" value="X-ray"/>
    <property type="resolution" value="2.20 A"/>
    <property type="chains" value="A=1-312"/>
</dbReference>
<dbReference type="PDB" id="8R18">
    <property type="method" value="X-ray"/>
    <property type="resolution" value="1.89 A"/>
    <property type="chains" value="A=1-312"/>
</dbReference>
<dbReference type="PDB" id="8R1K">
    <property type="method" value="X-ray"/>
    <property type="resolution" value="1.95 A"/>
    <property type="chains" value="A=1-312"/>
</dbReference>
<dbReference type="PDB" id="8R1N">
    <property type="method" value="X-ray"/>
    <property type="resolution" value="2.21 A"/>
    <property type="chains" value="A=1-312"/>
</dbReference>
<dbReference type="PDB" id="8R1P">
    <property type="method" value="X-ray"/>
    <property type="resolution" value="2.45 A"/>
    <property type="chains" value="A=1-312"/>
</dbReference>
<dbReference type="PDB" id="8R1T">
    <property type="method" value="X-ray"/>
    <property type="resolution" value="2.00 A"/>
    <property type="chains" value="A=1-312"/>
</dbReference>
<dbReference type="PDB" id="8R1W">
    <property type="method" value="X-ray"/>
    <property type="resolution" value="2.15 A"/>
    <property type="chains" value="A=1-312"/>
</dbReference>
<dbReference type="PDB" id="8R25">
    <property type="method" value="X-ray"/>
    <property type="resolution" value="2.10 A"/>
    <property type="chains" value="A=1-312"/>
</dbReference>
<dbReference type="PDB" id="8R27">
    <property type="method" value="X-ray"/>
    <property type="resolution" value="1.95 A"/>
    <property type="chains" value="A=1-312"/>
</dbReference>
<dbReference type="PDBsum" id="1XQZ"/>
<dbReference type="PDBsum" id="1XR1"/>
<dbReference type="PDBsum" id="1XWS"/>
<dbReference type="PDBsum" id="1YHS"/>
<dbReference type="PDBsum" id="1YI3"/>
<dbReference type="PDBsum" id="1YI4"/>
<dbReference type="PDBsum" id="1YWV"/>
<dbReference type="PDBsum" id="1YXS"/>
<dbReference type="PDBsum" id="1YXT"/>
<dbReference type="PDBsum" id="1YXU"/>
<dbReference type="PDBsum" id="1YXV"/>
<dbReference type="PDBsum" id="1YXX"/>
<dbReference type="PDBsum" id="2BIK"/>
<dbReference type="PDBsum" id="2BIL"/>
<dbReference type="PDBsum" id="2BZH"/>
<dbReference type="PDBsum" id="2BZI"/>
<dbReference type="PDBsum" id="2BZJ"/>
<dbReference type="PDBsum" id="2BZK"/>
<dbReference type="PDBsum" id="2C3I"/>
<dbReference type="PDBsum" id="2J2I"/>
<dbReference type="PDBsum" id="2O3P"/>
<dbReference type="PDBsum" id="2O63"/>
<dbReference type="PDBsum" id="2O64"/>
<dbReference type="PDBsum" id="2O65"/>
<dbReference type="PDBsum" id="2OBJ"/>
<dbReference type="PDBsum" id="2OI4"/>
<dbReference type="PDBsum" id="2XIX"/>
<dbReference type="PDBsum" id="2XIY"/>
<dbReference type="PDBsum" id="2XIZ"/>
<dbReference type="PDBsum" id="2XJ0"/>
<dbReference type="PDBsum" id="2XJ1"/>
<dbReference type="PDBsum" id="2XJ2"/>
<dbReference type="PDBsum" id="3A99"/>
<dbReference type="PDBsum" id="3BGP"/>
<dbReference type="PDBsum" id="3BGQ"/>
<dbReference type="PDBsum" id="3BGZ"/>
<dbReference type="PDBsum" id="3BWF"/>
<dbReference type="PDBsum" id="3C4E"/>
<dbReference type="PDBsum" id="3CXW"/>
<dbReference type="PDBsum" id="3CY2"/>
<dbReference type="PDBsum" id="3CY3"/>
<dbReference type="PDBsum" id="3DCV"/>
<dbReference type="PDBsum" id="3F2A"/>
<dbReference type="PDBsum" id="3JPV"/>
<dbReference type="PDBsum" id="3JXW"/>
<dbReference type="PDBsum" id="3JY0"/>
<dbReference type="PDBsum" id="3JYA"/>
<dbReference type="PDBsum" id="3MA3"/>
<dbReference type="PDBsum" id="3QF9"/>
<dbReference type="PDBsum" id="3R00"/>
<dbReference type="PDBsum" id="3R01"/>
<dbReference type="PDBsum" id="3R02"/>
<dbReference type="PDBsum" id="3R04"/>
<dbReference type="PDBsum" id="3T9I"/>
<dbReference type="PDBsum" id="3UIX"/>
<dbReference type="PDBsum" id="3UMW"/>
<dbReference type="PDBsum" id="3UMX"/>
<dbReference type="PDBsum" id="3VBQ"/>
<dbReference type="PDBsum" id="3VBT"/>
<dbReference type="PDBsum" id="3VBV"/>
<dbReference type="PDBsum" id="3VBW"/>
<dbReference type="PDBsum" id="3VBX"/>
<dbReference type="PDBsum" id="3VBY"/>
<dbReference type="PDBsum" id="3VC4"/>
<dbReference type="PDBsum" id="3WE8"/>
<dbReference type="PDBsum" id="4A7C"/>
<dbReference type="PDBsum" id="4ALU"/>
<dbReference type="PDBsum" id="4ALV"/>
<dbReference type="PDBsum" id="4ALW"/>
<dbReference type="PDBsum" id="4AS0"/>
<dbReference type="PDBsum" id="4BZN"/>
<dbReference type="PDBsum" id="4BZO"/>
<dbReference type="PDBsum" id="4DTK"/>
<dbReference type="PDBsum" id="4ENX"/>
<dbReference type="PDBsum" id="4ENY"/>
<dbReference type="PDBsum" id="4GW8"/>
<dbReference type="PDBsum" id="4I41"/>
<dbReference type="PDBsum" id="4IAA"/>
<dbReference type="PDBsum" id="4JX3"/>
<dbReference type="PDBsum" id="4JX7"/>
<dbReference type="PDBsum" id="4K0Y"/>
<dbReference type="PDBsum" id="4K18"/>
<dbReference type="PDBsum" id="4K1B"/>
<dbReference type="PDBsum" id="4LL5"/>
<dbReference type="PDBsum" id="4LM5"/>
<dbReference type="PDBsum" id="4LMU"/>
<dbReference type="PDBsum" id="4MBI"/>
<dbReference type="PDBsum" id="4MBL"/>
<dbReference type="PDBsum" id="4MTA"/>
<dbReference type="PDBsum" id="4N6Y"/>
<dbReference type="PDBsum" id="4N6Z"/>
<dbReference type="PDBsum" id="4N70"/>
<dbReference type="PDBsum" id="4RBL"/>
<dbReference type="PDBsum" id="4RC2"/>
<dbReference type="PDBsum" id="4RC3"/>
<dbReference type="PDBsum" id="4RC4"/>
<dbReference type="PDBsum" id="4RPV"/>
<dbReference type="PDBsum" id="4TY1"/>
<dbReference type="PDBsum" id="4WRS"/>
<dbReference type="PDBsum" id="4WSY"/>
<dbReference type="PDBsum" id="4WT6"/>
<dbReference type="PDBsum" id="4XH6"/>
<dbReference type="PDBsum" id="4XHK"/>
<dbReference type="PDBsum" id="5C1Q"/>
<dbReference type="PDBsum" id="5DGZ"/>
<dbReference type="PDBsum" id="5DHJ"/>
<dbReference type="PDBsum" id="5DIA"/>
<dbReference type="PDBsum" id="5DWR"/>
<dbReference type="PDBsum" id="5EOL"/>
<dbReference type="PDBsum" id="5IIS"/>
<dbReference type="PDBsum" id="5IPJ"/>
<dbReference type="PDBsum" id="5KCX"/>
<dbReference type="PDBsum" id="5KGD"/>
<dbReference type="PDBsum" id="5KGE"/>
<dbReference type="PDBsum" id="5KGG"/>
<dbReference type="PDBsum" id="5KGI"/>
<dbReference type="PDBsum" id="5KGK"/>
<dbReference type="PDBsum" id="5KZI"/>
<dbReference type="PDBsum" id="5MZL"/>
<dbReference type="PDBsum" id="5N4N"/>
<dbReference type="PDBsum" id="5N4O"/>
<dbReference type="PDBsum" id="5N4R"/>
<dbReference type="PDBsum" id="5N4U"/>
<dbReference type="PDBsum" id="5N4V"/>
<dbReference type="PDBsum" id="5N4X"/>
<dbReference type="PDBsum" id="5N4Y"/>
<dbReference type="PDBsum" id="5N4Z"/>
<dbReference type="PDBsum" id="5N50"/>
<dbReference type="PDBsum" id="5N51"/>
<dbReference type="PDBsum" id="5N52"/>
<dbReference type="PDBsum" id="5N5L"/>
<dbReference type="PDBsum" id="5N5M"/>
<dbReference type="PDBsum" id="5NDT"/>
<dbReference type="PDBsum" id="5O11"/>
<dbReference type="PDBsum" id="5O12"/>
<dbReference type="PDBsum" id="5O13"/>
<dbReference type="PDBsum" id="5TEL"/>
<dbReference type="PDBsum" id="5TEX"/>
<dbReference type="PDBsum" id="5TOE"/>
<dbReference type="PDBsum" id="5TUR"/>
<dbReference type="PDBsum" id="5V80"/>
<dbReference type="PDBsum" id="5V82"/>
<dbReference type="PDBsum" id="5VUA"/>
<dbReference type="PDBsum" id="5VUB"/>
<dbReference type="PDBsum" id="5VUC"/>
<dbReference type="PDBsum" id="6AYD"/>
<dbReference type="PDBsum" id="6BSK"/>
<dbReference type="PDBsum" id="6KZI"/>
<dbReference type="PDBsum" id="6L11"/>
<dbReference type="PDBsum" id="6L12"/>
<dbReference type="PDBsum" id="6L13"/>
<dbReference type="PDBsum" id="6L14"/>
<dbReference type="PDBsum" id="6L15"/>
<dbReference type="PDBsum" id="6L16"/>
<dbReference type="PDBsum" id="6L17"/>
<dbReference type="PDBsum" id="6MT0"/>
<dbReference type="PDBsum" id="6NO8"/>
<dbReference type="PDBsum" id="6NO9"/>
<dbReference type="PDBsum" id="6PCW"/>
<dbReference type="PDBsum" id="6PDI"/>
<dbReference type="PDBsum" id="6PDN"/>
<dbReference type="PDBsum" id="6PDO"/>
<dbReference type="PDBsum" id="6PDP"/>
<dbReference type="PDBsum" id="6QXK"/>
<dbReference type="PDBsum" id="6VRU"/>
<dbReference type="PDBsum" id="6VRV"/>
<dbReference type="PDBsum" id="6YKD"/>
<dbReference type="PDBsum" id="7OOV"/>
<dbReference type="PDBsum" id="7OOW"/>
<dbReference type="PDBsum" id="7OOX"/>
<dbReference type="PDBsum" id="7QB2"/>
<dbReference type="PDBsum" id="7QFM"/>
<dbReference type="PDBsum" id="7VSY"/>
<dbReference type="PDBsum" id="7XSV"/>
<dbReference type="PDBsum" id="7Z6U"/>
<dbReference type="PDBsum" id="7ZUN"/>
<dbReference type="PDBsum" id="8AFR"/>
<dbReference type="PDBsum" id="8R0H"/>
<dbReference type="PDBsum" id="8R0Q"/>
<dbReference type="PDBsum" id="8R0W"/>
<dbReference type="PDBsum" id="8R0Y"/>
<dbReference type="PDBsum" id="8R10"/>
<dbReference type="PDBsum" id="8R18"/>
<dbReference type="PDBsum" id="8R1K"/>
<dbReference type="PDBsum" id="8R1N"/>
<dbReference type="PDBsum" id="8R1P"/>
<dbReference type="PDBsum" id="8R1T"/>
<dbReference type="PDBsum" id="8R1W"/>
<dbReference type="PDBsum" id="8R25"/>
<dbReference type="PDBsum" id="8R27"/>
<dbReference type="SMR" id="P11309"/>
<dbReference type="BioGRID" id="111310">
    <property type="interactions" value="77"/>
</dbReference>
<dbReference type="CORUM" id="P11309"/>
<dbReference type="FunCoup" id="P11309">
    <property type="interactions" value="2834"/>
</dbReference>
<dbReference type="IntAct" id="P11309">
    <property type="interactions" value="41"/>
</dbReference>
<dbReference type="MINT" id="P11309"/>
<dbReference type="STRING" id="9606.ENSP00000362608"/>
<dbReference type="BindingDB" id="P11309"/>
<dbReference type="ChEMBL" id="CHEMBL2147"/>
<dbReference type="DrugBank" id="DB08022">
    <property type="generic name" value="(2S)-1,3-benzothiazol-2-yl{2-[(2-pyridin-3-ylethyl)amino]pyrimidin-4-yl}ethanenitrile"/>
</dbReference>
<dbReference type="DrugBank" id="DB03650">
    <property type="generic name" value="(3e)-3-[(4-Hydroxyphenyl)Imino]-1h-Indol-2(3h)-One"/>
</dbReference>
<dbReference type="DrugBank" id="DB07242">
    <property type="generic name" value="(4R)-7,8-dichloro-1',9-dimethyl-1-oxo-1,2,4,9-tetrahydrospiro[beta-carboline-3,4'-piperidine]-4-carbonitrile"/>
</dbReference>
<dbReference type="DrugBank" id="DB08166">
    <property type="generic name" value="(4R)-7-chloro-9-methyl-1-oxo-1,2,4,9-tetrahydrospiro[beta-carboline-3,4'-piperidine]-4-carbonitrile"/>
</dbReference>
<dbReference type="DrugBank" id="DB08709">
    <property type="generic name" value="2,3-diphenyl-1H-indole-7-carboxylic acid"/>
</dbReference>
<dbReference type="DrugBank" id="DB01754">
    <property type="generic name" value="3,4-Dihydroxy-1-Methylquinolin-2(1h)-One"/>
</dbReference>
<dbReference type="DrugBank" id="DB07151">
    <property type="generic name" value="4-(4-hydroxy-3-methylphenyl)-6-phenylpyrimidin-2(5H)-one"/>
</dbReference>
<dbReference type="DrugBank" id="DB08707">
    <property type="generic name" value="4-[3-(4-chlorophenyl)-2,1-benzisoxazol-5-yl]pyrimidin-2-amine"/>
</dbReference>
<dbReference type="DrugBank" id="DB08705">
    <property type="generic name" value="6-(5-BROMO-2-HYDROXYPHENYL)-2-OXO-4-PHENYL-1,2-DIHYDROPYRIDINE-3-CARBONITRILE"/>
</dbReference>
<dbReference type="DrugBank" id="DB03777">
    <property type="generic name" value="Bisindolylmaleimide I"/>
</dbReference>
<dbReference type="DrugBank" id="DB04522">
    <property type="generic name" value="Dexfosfoserine"/>
</dbReference>
<dbReference type="DrugBank" id="DB12010">
    <property type="generic name" value="Fostamatinib"/>
</dbReference>
<dbReference type="DrugBank" id="DB03366">
    <property type="generic name" value="Imidazole"/>
</dbReference>
<dbReference type="DrugBank" id="DB04715">
    <property type="generic name" value="IMIDAZOPYRIDAZIN 1"/>
</dbReference>
<dbReference type="DrugBank" id="DB02656">
    <property type="generic name" value="LY-294002"/>
</dbReference>
<dbReference type="DrugBank" id="DB08708">
    <property type="generic name" value="N-cyclohexyl-3-[3-(trifluoromethyl)phenyl][1,2,4]triazolo[4,3-b]pyridazin-6-amine"/>
</dbReference>
<dbReference type="DrugBank" id="DB07524">
    <property type="generic name" value="N-phenyl-1H-pyrrolo[2,3-b]pyridin-3-amine"/>
</dbReference>
<dbReference type="DrugBank" id="DB04395">
    <property type="generic name" value="Phosphoaminophosphonic Acid-Adenylate Ester"/>
</dbReference>
<dbReference type="DrugBank" id="DB04216">
    <property type="generic name" value="Quercetin"/>
</dbReference>
<dbReference type="DrugBank" id="DB04530">
    <property type="generic name" value="S,S-(2-Hydroxyethyl)Thiocysteine"/>
</dbReference>
<dbReference type="DrugBank" id="DB02010">
    <property type="generic name" value="Staurosporine"/>
</dbReference>
<dbReference type="DrugBank" id="DB08230">
    <property type="generic name" value="Tricetin"/>
</dbReference>
<dbReference type="DrugCentral" id="P11309"/>
<dbReference type="GuidetoPHARMACOLOGY" id="2158"/>
<dbReference type="GlyGen" id="P11309">
    <property type="glycosylation" value="1 site, 1 O-linked glycan (1 site)"/>
</dbReference>
<dbReference type="iPTMnet" id="P11309"/>
<dbReference type="PhosphoSitePlus" id="P11309"/>
<dbReference type="BioMuta" id="PIM1"/>
<dbReference type="DMDM" id="83305339"/>
<dbReference type="jPOST" id="P11309"/>
<dbReference type="MassIVE" id="P11309"/>
<dbReference type="PaxDb" id="9606-ENSP00000362608"/>
<dbReference type="PeptideAtlas" id="P11309"/>
<dbReference type="ProteomicsDB" id="52741">
    <molecule id="P11309-1"/>
</dbReference>
<dbReference type="ProteomicsDB" id="52742">
    <molecule id="P11309-2"/>
</dbReference>
<dbReference type="Pumba" id="P11309"/>
<dbReference type="Antibodypedia" id="1207">
    <property type="antibodies" value="710 antibodies from 39 providers"/>
</dbReference>
<dbReference type="DNASU" id="5292"/>
<dbReference type="Ensembl" id="ENST00000373509.6">
    <molecule id="P11309-1"/>
    <property type="protein sequence ID" value="ENSP00000362608.5"/>
    <property type="gene ID" value="ENSG00000137193.14"/>
</dbReference>
<dbReference type="GeneID" id="5292"/>
<dbReference type="KEGG" id="hsa:5292"/>
<dbReference type="MANE-Select" id="ENST00000373509.6">
    <property type="protein sequence ID" value="ENSP00000362608.5"/>
    <property type="RefSeq nucleotide sequence ID" value="NM_002648.4"/>
    <property type="RefSeq protein sequence ID" value="NP_002639.1"/>
</dbReference>
<dbReference type="UCSC" id="uc003onk.4">
    <molecule id="P11309-1"/>
    <property type="organism name" value="human"/>
</dbReference>
<dbReference type="AGR" id="HGNC:8986"/>
<dbReference type="CTD" id="5292"/>
<dbReference type="DisGeNET" id="5292"/>
<dbReference type="GeneCards" id="PIM1"/>
<dbReference type="HGNC" id="HGNC:8986">
    <property type="gene designation" value="PIM1"/>
</dbReference>
<dbReference type="HPA" id="ENSG00000137193">
    <property type="expression patterns" value="Tissue enhanced (bone)"/>
</dbReference>
<dbReference type="MalaCards" id="PIM1"/>
<dbReference type="MIM" id="164960">
    <property type="type" value="gene"/>
</dbReference>
<dbReference type="neXtProt" id="NX_P11309"/>
<dbReference type="OpenTargets" id="ENSG00000137193"/>
<dbReference type="PharmGKB" id="PA33318"/>
<dbReference type="VEuPathDB" id="HostDB:ENSG00000137193"/>
<dbReference type="eggNOG" id="KOG0583">
    <property type="taxonomic scope" value="Eukaryota"/>
</dbReference>
<dbReference type="GeneTree" id="ENSGT00940000153394"/>
<dbReference type="HOGENOM" id="CLU_000288_63_0_1"/>
<dbReference type="InParanoid" id="P11309"/>
<dbReference type="OMA" id="IIRGQVY"/>
<dbReference type="OrthoDB" id="10252171at2759"/>
<dbReference type="PAN-GO" id="P11309">
    <property type="GO annotations" value="3 GO annotations based on evolutionary models"/>
</dbReference>
<dbReference type="PhylomeDB" id="P11309"/>
<dbReference type="TreeFam" id="TF320810"/>
<dbReference type="BRENDA" id="2.7.11.1">
    <property type="organism ID" value="2681"/>
</dbReference>
<dbReference type="PathwayCommons" id="P11309"/>
<dbReference type="Reactome" id="R-HSA-6785807">
    <property type="pathway name" value="Interleukin-4 and Interleukin-13 signaling"/>
</dbReference>
<dbReference type="Reactome" id="R-HSA-9702518">
    <property type="pathway name" value="STAT5 activation downstream of FLT3 ITD mutants"/>
</dbReference>
<dbReference type="Reactome" id="R-HSA-9703465">
    <property type="pathway name" value="Signaling by FLT3 fusion proteins"/>
</dbReference>
<dbReference type="SignaLink" id="P11309"/>
<dbReference type="SIGNOR" id="P11309"/>
<dbReference type="BioGRID-ORCS" id="5292">
    <property type="hits" value="53 hits in 1206 CRISPR screens"/>
</dbReference>
<dbReference type="CD-CODE" id="8C2F96ED">
    <property type="entry name" value="Centrosome"/>
</dbReference>
<dbReference type="ChiTaRS" id="PIM1">
    <property type="organism name" value="human"/>
</dbReference>
<dbReference type="EvolutionaryTrace" id="P11309"/>
<dbReference type="GeneWiki" id="PIM1"/>
<dbReference type="GenomeRNAi" id="5292"/>
<dbReference type="Pharos" id="P11309">
    <property type="development level" value="Tchem"/>
</dbReference>
<dbReference type="PRO" id="PR:P11309"/>
<dbReference type="Proteomes" id="UP000005640">
    <property type="component" value="Chromosome 6"/>
</dbReference>
<dbReference type="RNAct" id="P11309">
    <property type="molecule type" value="protein"/>
</dbReference>
<dbReference type="Bgee" id="ENSG00000137193">
    <property type="expression patterns" value="Expressed in lower esophagus mucosa and 178 other cell types or tissues"/>
</dbReference>
<dbReference type="ExpressionAtlas" id="P11309">
    <property type="expression patterns" value="baseline and differential"/>
</dbReference>
<dbReference type="GO" id="GO:0005737">
    <property type="term" value="C:cytoplasm"/>
    <property type="evidence" value="ECO:0000314"/>
    <property type="project" value="UniProtKB"/>
</dbReference>
<dbReference type="GO" id="GO:0005829">
    <property type="term" value="C:cytosol"/>
    <property type="evidence" value="ECO:0000314"/>
    <property type="project" value="HPA"/>
</dbReference>
<dbReference type="GO" id="GO:0005730">
    <property type="term" value="C:nucleolus"/>
    <property type="evidence" value="ECO:0000314"/>
    <property type="project" value="HPA"/>
</dbReference>
<dbReference type="GO" id="GO:0005654">
    <property type="term" value="C:nucleoplasm"/>
    <property type="evidence" value="ECO:0000314"/>
    <property type="project" value="HPA"/>
</dbReference>
<dbReference type="GO" id="GO:0005634">
    <property type="term" value="C:nucleus"/>
    <property type="evidence" value="ECO:0000314"/>
    <property type="project" value="BHF-UCL"/>
</dbReference>
<dbReference type="GO" id="GO:0005886">
    <property type="term" value="C:plasma membrane"/>
    <property type="evidence" value="ECO:0000314"/>
    <property type="project" value="UniProtKB"/>
</dbReference>
<dbReference type="GO" id="GO:0005524">
    <property type="term" value="F:ATP binding"/>
    <property type="evidence" value="ECO:0000314"/>
    <property type="project" value="UniProtKB"/>
</dbReference>
<dbReference type="GO" id="GO:0030145">
    <property type="term" value="F:manganese ion binding"/>
    <property type="evidence" value="ECO:0000314"/>
    <property type="project" value="UniProtKB"/>
</dbReference>
<dbReference type="GO" id="GO:0106310">
    <property type="term" value="F:protein serine kinase activity"/>
    <property type="evidence" value="ECO:0007669"/>
    <property type="project" value="RHEA"/>
</dbReference>
<dbReference type="GO" id="GO:0043539">
    <property type="term" value="F:protein serine/threonine kinase activator activity"/>
    <property type="evidence" value="ECO:0000315"/>
    <property type="project" value="UniProtKB"/>
</dbReference>
<dbReference type="GO" id="GO:0004674">
    <property type="term" value="F:protein serine/threonine kinase activity"/>
    <property type="evidence" value="ECO:0000314"/>
    <property type="project" value="UniProtKB"/>
</dbReference>
<dbReference type="GO" id="GO:0043024">
    <property type="term" value="F:ribosomal small subunit binding"/>
    <property type="evidence" value="ECO:0000353"/>
    <property type="project" value="UniProtKB"/>
</dbReference>
<dbReference type="GO" id="GO:0008134">
    <property type="term" value="F:transcription factor binding"/>
    <property type="evidence" value="ECO:0000353"/>
    <property type="project" value="UniProtKB"/>
</dbReference>
<dbReference type="GO" id="GO:0006915">
    <property type="term" value="P:apoptotic process"/>
    <property type="evidence" value="ECO:0007669"/>
    <property type="project" value="UniProtKB-KW"/>
</dbReference>
<dbReference type="GO" id="GO:1990748">
    <property type="term" value="P:cellular detoxification"/>
    <property type="evidence" value="ECO:0000315"/>
    <property type="project" value="UniProtKB"/>
</dbReference>
<dbReference type="GO" id="GO:0071346">
    <property type="term" value="P:cellular response to type II interferon"/>
    <property type="evidence" value="ECO:0000314"/>
    <property type="project" value="UniProtKB"/>
</dbReference>
<dbReference type="GO" id="GO:0043066">
    <property type="term" value="P:negative regulation of apoptotic process"/>
    <property type="evidence" value="ECO:0000314"/>
    <property type="project" value="UniProtKB"/>
</dbReference>
<dbReference type="GO" id="GO:0043433">
    <property type="term" value="P:negative regulation of DNA-binding transcription factor activity"/>
    <property type="evidence" value="ECO:0000314"/>
    <property type="project" value="UniProtKB"/>
</dbReference>
<dbReference type="GO" id="GO:0045824">
    <property type="term" value="P:negative regulation of innate immune response"/>
    <property type="evidence" value="ECO:0000314"/>
    <property type="project" value="UniProtKB"/>
</dbReference>
<dbReference type="GO" id="GO:0090336">
    <property type="term" value="P:positive regulation of brown fat cell differentiation"/>
    <property type="evidence" value="ECO:0000250"/>
    <property type="project" value="UniProtKB"/>
</dbReference>
<dbReference type="GO" id="GO:0060045">
    <property type="term" value="P:positive regulation of cardiac muscle cell proliferation"/>
    <property type="evidence" value="ECO:0000314"/>
    <property type="project" value="BHF-UCL"/>
</dbReference>
<dbReference type="GO" id="GO:1905062">
    <property type="term" value="P:positive regulation of cardioblast proliferation"/>
    <property type="evidence" value="ECO:0000314"/>
    <property type="project" value="BHF-UCL"/>
</dbReference>
<dbReference type="GO" id="GO:0045737">
    <property type="term" value="P:positive regulation of cyclin-dependent protein serine/threonine kinase activity"/>
    <property type="evidence" value="ECO:0000314"/>
    <property type="project" value="UniProtKB"/>
</dbReference>
<dbReference type="GO" id="GO:0045893">
    <property type="term" value="P:positive regulation of DNA-templated transcription"/>
    <property type="evidence" value="ECO:0007669"/>
    <property type="project" value="Ensembl"/>
</dbReference>
<dbReference type="GO" id="GO:0071902">
    <property type="term" value="P:positive regulation of protein serine/threonine kinase activity"/>
    <property type="evidence" value="ECO:0000315"/>
    <property type="project" value="UniProtKB"/>
</dbReference>
<dbReference type="GO" id="GO:1904263">
    <property type="term" value="P:positive regulation of TORC1 signaling"/>
    <property type="evidence" value="ECO:0000314"/>
    <property type="project" value="UniProtKB"/>
</dbReference>
<dbReference type="GO" id="GO:0046777">
    <property type="term" value="P:protein autophosphorylation"/>
    <property type="evidence" value="ECO:0000314"/>
    <property type="project" value="UniProtKB"/>
</dbReference>
<dbReference type="GO" id="GO:0006468">
    <property type="term" value="P:protein phosphorylation"/>
    <property type="evidence" value="ECO:0000314"/>
    <property type="project" value="UniProtKB"/>
</dbReference>
<dbReference type="GO" id="GO:0050821">
    <property type="term" value="P:protein stabilization"/>
    <property type="evidence" value="ECO:0007669"/>
    <property type="project" value="Ensembl"/>
</dbReference>
<dbReference type="GO" id="GO:1902033">
    <property type="term" value="P:regulation of hematopoietic stem cell proliferation"/>
    <property type="evidence" value="ECO:0007669"/>
    <property type="project" value="Ensembl"/>
</dbReference>
<dbReference type="GO" id="GO:0007346">
    <property type="term" value="P:regulation of mitotic cell cycle"/>
    <property type="evidence" value="ECO:0000318"/>
    <property type="project" value="GO_Central"/>
</dbReference>
<dbReference type="GO" id="GO:0022898">
    <property type="term" value="P:regulation of transmembrane transporter activity"/>
    <property type="evidence" value="ECO:0000315"/>
    <property type="project" value="UniProtKB"/>
</dbReference>
<dbReference type="GO" id="GO:0070561">
    <property type="term" value="P:vitamin D receptor signaling pathway"/>
    <property type="evidence" value="ECO:0000315"/>
    <property type="project" value="CACAO"/>
</dbReference>
<dbReference type="CDD" id="cd14100">
    <property type="entry name" value="STKc_PIM1"/>
    <property type="match status" value="1"/>
</dbReference>
<dbReference type="DisProt" id="DP00322"/>
<dbReference type="FunFam" id="1.10.510.10:FF:000209">
    <property type="entry name" value="Serine/threonine-protein kinase pim-1"/>
    <property type="match status" value="1"/>
</dbReference>
<dbReference type="FunFam" id="3.30.200.20:FF:000232">
    <property type="entry name" value="Serine/threonine-protein kinase pim-1"/>
    <property type="match status" value="1"/>
</dbReference>
<dbReference type="Gene3D" id="3.30.200.20">
    <property type="entry name" value="Phosphorylase Kinase, domain 1"/>
    <property type="match status" value="1"/>
</dbReference>
<dbReference type="Gene3D" id="1.10.510.10">
    <property type="entry name" value="Transferase(Phosphotransferase) domain 1"/>
    <property type="match status" value="1"/>
</dbReference>
<dbReference type="InterPro" id="IPR011009">
    <property type="entry name" value="Kinase-like_dom_sf"/>
</dbReference>
<dbReference type="InterPro" id="IPR017348">
    <property type="entry name" value="PIM1/2/3"/>
</dbReference>
<dbReference type="InterPro" id="IPR051138">
    <property type="entry name" value="PIM_Ser/Thr_kinase"/>
</dbReference>
<dbReference type="InterPro" id="IPR000719">
    <property type="entry name" value="Prot_kinase_dom"/>
</dbReference>
<dbReference type="InterPro" id="IPR017441">
    <property type="entry name" value="Protein_kinase_ATP_BS"/>
</dbReference>
<dbReference type="InterPro" id="IPR008271">
    <property type="entry name" value="Ser/Thr_kinase_AS"/>
</dbReference>
<dbReference type="PANTHER" id="PTHR22984">
    <property type="entry name" value="SERINE/THREONINE-PROTEIN KINASE PIM"/>
    <property type="match status" value="1"/>
</dbReference>
<dbReference type="PANTHER" id="PTHR22984:SF29">
    <property type="entry name" value="SERINE_THREONINE-PROTEIN KINASE PIM-1"/>
    <property type="match status" value="1"/>
</dbReference>
<dbReference type="Pfam" id="PF00069">
    <property type="entry name" value="Pkinase"/>
    <property type="match status" value="1"/>
</dbReference>
<dbReference type="PIRSF" id="PIRSF037993">
    <property type="entry name" value="STPK_Pim-1"/>
    <property type="match status" value="1"/>
</dbReference>
<dbReference type="SMART" id="SM00220">
    <property type="entry name" value="S_TKc"/>
    <property type="match status" value="1"/>
</dbReference>
<dbReference type="SUPFAM" id="SSF56112">
    <property type="entry name" value="Protein kinase-like (PK-like)"/>
    <property type="match status" value="1"/>
</dbReference>
<dbReference type="PROSITE" id="PS00107">
    <property type="entry name" value="PROTEIN_KINASE_ATP"/>
    <property type="match status" value="1"/>
</dbReference>
<dbReference type="PROSITE" id="PS50011">
    <property type="entry name" value="PROTEIN_KINASE_DOM"/>
    <property type="match status" value="1"/>
</dbReference>
<dbReference type="PROSITE" id="PS00108">
    <property type="entry name" value="PROTEIN_KINASE_ST"/>
    <property type="match status" value="1"/>
</dbReference>
<protein>
    <recommendedName>
        <fullName>Serine/threonine-protein kinase pim-1</fullName>
        <ecNumber evidence="7 9 11 20">2.7.11.1</ecNumber>
    </recommendedName>
</protein>
<proteinExistence type="evidence at protein level"/>
<reference key="1">
    <citation type="journal article" date="1990" name="Gene">
        <title>Primary structure of the putative human oncogene, pim-1.</title>
        <authorList>
            <person name="Reeves R."/>
            <person name="Spies G.A."/>
            <person name="Kiefer M."/>
            <person name="Barr P.J."/>
            <person name="Power M."/>
        </authorList>
    </citation>
    <scope>NUCLEOTIDE SEQUENCE [GENOMIC DNA] (ISOFORM 1)</scope>
</reference>
<reference key="2">
    <citation type="journal article" date="1987" name="Gene">
        <title>The cDNA sequence and gene analysis of the human pim oncogene.</title>
        <authorList>
            <person name="Zakut-Houri R."/>
            <person name="Hazum S."/>
            <person name="Givol D."/>
            <person name="Telerman A."/>
        </authorList>
    </citation>
    <scope>NUCLEOTIDE SEQUENCE [MRNA] (ISOFORM 1)</scope>
</reference>
<reference key="3">
    <citation type="journal article" date="1987" name="Oncogene Res.">
        <title>Comparison of the human and mouse PIM-1 cDNAs: nucleotide sequence and immunological identification of the in vitro synthesized PIM-1 protein.</title>
        <authorList>
            <person name="Domen J."/>
            <person name="von Lindern M."/>
            <person name="Hermans A."/>
            <person name="Breuer M."/>
            <person name="Grosveld G."/>
            <person name="Berns A."/>
        </authorList>
    </citation>
    <scope>NUCLEOTIDE SEQUENCE [MRNA] (ISOFORM 1)</scope>
</reference>
<reference key="4">
    <citation type="journal article" date="1987" name="J. Cell. Biochem.">
        <title>Cloning and characterization of the human PIM-1 gene: a putative oncogene related to the protein kinases.</title>
        <authorList>
            <person name="Meeker T.C."/>
            <person name="Nagarajan L."/>
            <person name="Ar-Rushdi A."/>
            <person name="Croce C.M."/>
        </authorList>
    </citation>
    <scope>NUCLEOTIDE SEQUENCE [MRNA] (ISOFORM 1)</scope>
</reference>
<reference key="5">
    <citation type="journal article" date="2006" name="Oncogene">
        <title>The 44 kDa Pim-1 kinase directly interacts with tyrosine kinase Etk/BMX and protects human prostate cancer cells from apoptosis induced by chemotherapeutic drugs.</title>
        <authorList>
            <person name="Xie Y."/>
            <person name="Xu K."/>
            <person name="Dai B."/>
            <person name="Guo Z."/>
            <person name="Jiang T."/>
            <person name="Chen H."/>
            <person name="Qiu Y."/>
        </authorList>
    </citation>
    <scope>NUCLEOTIDE SEQUENCE [MRNA] (ISOFORM 2)</scope>
    <scope>ALTERNATIVE INITIATION</scope>
    <scope>TISSUE SPECIFICITY</scope>
    <scope>SUBCELLULAR LOCATION</scope>
    <scope>INDUCTION</scope>
    <scope>INTERACTION WITH BMX</scope>
</reference>
<reference key="6">
    <citation type="journal article" date="2003" name="Nature">
        <title>The DNA sequence and analysis of human chromosome 6.</title>
        <authorList>
            <person name="Mungall A.J."/>
            <person name="Palmer S.A."/>
            <person name="Sims S.K."/>
            <person name="Edwards C.A."/>
            <person name="Ashurst J.L."/>
            <person name="Wilming L."/>
            <person name="Jones M.C."/>
            <person name="Horton R."/>
            <person name="Hunt S.E."/>
            <person name="Scott C.E."/>
            <person name="Gilbert J.G.R."/>
            <person name="Clamp M.E."/>
            <person name="Bethel G."/>
            <person name="Milne S."/>
            <person name="Ainscough R."/>
            <person name="Almeida J.P."/>
            <person name="Ambrose K.D."/>
            <person name="Andrews T.D."/>
            <person name="Ashwell R.I.S."/>
            <person name="Babbage A.K."/>
            <person name="Bagguley C.L."/>
            <person name="Bailey J."/>
            <person name="Banerjee R."/>
            <person name="Barker D.J."/>
            <person name="Barlow K.F."/>
            <person name="Bates K."/>
            <person name="Beare D.M."/>
            <person name="Beasley H."/>
            <person name="Beasley O."/>
            <person name="Bird C.P."/>
            <person name="Blakey S.E."/>
            <person name="Bray-Allen S."/>
            <person name="Brook J."/>
            <person name="Brown A.J."/>
            <person name="Brown J.Y."/>
            <person name="Burford D.C."/>
            <person name="Burrill W."/>
            <person name="Burton J."/>
            <person name="Carder C."/>
            <person name="Carter N.P."/>
            <person name="Chapman J.C."/>
            <person name="Clark S.Y."/>
            <person name="Clark G."/>
            <person name="Clee C.M."/>
            <person name="Clegg S."/>
            <person name="Cobley V."/>
            <person name="Collier R.E."/>
            <person name="Collins J.E."/>
            <person name="Colman L.K."/>
            <person name="Corby N.R."/>
            <person name="Coville G.J."/>
            <person name="Culley K.M."/>
            <person name="Dhami P."/>
            <person name="Davies J."/>
            <person name="Dunn M."/>
            <person name="Earthrowl M.E."/>
            <person name="Ellington A.E."/>
            <person name="Evans K.A."/>
            <person name="Faulkner L."/>
            <person name="Francis M.D."/>
            <person name="Frankish A."/>
            <person name="Frankland J."/>
            <person name="French L."/>
            <person name="Garner P."/>
            <person name="Garnett J."/>
            <person name="Ghori M.J."/>
            <person name="Gilby L.M."/>
            <person name="Gillson C.J."/>
            <person name="Glithero R.J."/>
            <person name="Grafham D.V."/>
            <person name="Grant M."/>
            <person name="Gribble S."/>
            <person name="Griffiths C."/>
            <person name="Griffiths M.N.D."/>
            <person name="Hall R."/>
            <person name="Halls K.S."/>
            <person name="Hammond S."/>
            <person name="Harley J.L."/>
            <person name="Hart E.A."/>
            <person name="Heath P.D."/>
            <person name="Heathcott R."/>
            <person name="Holmes S.J."/>
            <person name="Howden P.J."/>
            <person name="Howe K.L."/>
            <person name="Howell G.R."/>
            <person name="Huckle E."/>
            <person name="Humphray S.J."/>
            <person name="Humphries M.D."/>
            <person name="Hunt A.R."/>
            <person name="Johnson C.M."/>
            <person name="Joy A.A."/>
            <person name="Kay M."/>
            <person name="Keenan S.J."/>
            <person name="Kimberley A.M."/>
            <person name="King A."/>
            <person name="Laird G.K."/>
            <person name="Langford C."/>
            <person name="Lawlor S."/>
            <person name="Leongamornlert D.A."/>
            <person name="Leversha M."/>
            <person name="Lloyd C.R."/>
            <person name="Lloyd D.M."/>
            <person name="Loveland J.E."/>
            <person name="Lovell J."/>
            <person name="Martin S."/>
            <person name="Mashreghi-Mohammadi M."/>
            <person name="Maslen G.L."/>
            <person name="Matthews L."/>
            <person name="McCann O.T."/>
            <person name="McLaren S.J."/>
            <person name="McLay K."/>
            <person name="McMurray A."/>
            <person name="Moore M.J.F."/>
            <person name="Mullikin J.C."/>
            <person name="Niblett D."/>
            <person name="Nickerson T."/>
            <person name="Novik K.L."/>
            <person name="Oliver K."/>
            <person name="Overton-Larty E.K."/>
            <person name="Parker A."/>
            <person name="Patel R."/>
            <person name="Pearce A.V."/>
            <person name="Peck A.I."/>
            <person name="Phillimore B.J.C.T."/>
            <person name="Phillips S."/>
            <person name="Plumb R.W."/>
            <person name="Porter K.M."/>
            <person name="Ramsey Y."/>
            <person name="Ranby S.A."/>
            <person name="Rice C.M."/>
            <person name="Ross M.T."/>
            <person name="Searle S.M."/>
            <person name="Sehra H.K."/>
            <person name="Sheridan E."/>
            <person name="Skuce C.D."/>
            <person name="Smith S."/>
            <person name="Smith M."/>
            <person name="Spraggon L."/>
            <person name="Squares S.L."/>
            <person name="Steward C.A."/>
            <person name="Sycamore N."/>
            <person name="Tamlyn-Hall G."/>
            <person name="Tester J."/>
            <person name="Theaker A.J."/>
            <person name="Thomas D.W."/>
            <person name="Thorpe A."/>
            <person name="Tracey A."/>
            <person name="Tromans A."/>
            <person name="Tubby B."/>
            <person name="Wall M."/>
            <person name="Wallis J.M."/>
            <person name="West A.P."/>
            <person name="White S.S."/>
            <person name="Whitehead S.L."/>
            <person name="Whittaker H."/>
            <person name="Wild A."/>
            <person name="Willey D.J."/>
            <person name="Wilmer T.E."/>
            <person name="Wood J.M."/>
            <person name="Wray P.W."/>
            <person name="Wyatt J.C."/>
            <person name="Young L."/>
            <person name="Younger R.M."/>
            <person name="Bentley D.R."/>
            <person name="Coulson A."/>
            <person name="Durbin R.M."/>
            <person name="Hubbard T."/>
            <person name="Sulston J.E."/>
            <person name="Dunham I."/>
            <person name="Rogers J."/>
            <person name="Beck S."/>
        </authorList>
    </citation>
    <scope>NUCLEOTIDE SEQUENCE [LARGE SCALE GENOMIC DNA]</scope>
</reference>
<reference key="7">
    <citation type="submission" date="2005-07" db="EMBL/GenBank/DDBJ databases">
        <authorList>
            <person name="Mural R.J."/>
            <person name="Istrail S."/>
            <person name="Sutton G.G."/>
            <person name="Florea L."/>
            <person name="Halpern A.L."/>
            <person name="Mobarry C.M."/>
            <person name="Lippert R."/>
            <person name="Walenz B."/>
            <person name="Shatkay H."/>
            <person name="Dew I."/>
            <person name="Miller J.R."/>
            <person name="Flanigan M.J."/>
            <person name="Edwards N.J."/>
            <person name="Bolanos R."/>
            <person name="Fasulo D."/>
            <person name="Halldorsson B.V."/>
            <person name="Hannenhalli S."/>
            <person name="Turner R."/>
            <person name="Yooseph S."/>
            <person name="Lu F."/>
            <person name="Nusskern D.R."/>
            <person name="Shue B.C."/>
            <person name="Zheng X.H."/>
            <person name="Zhong F."/>
            <person name="Delcher A.L."/>
            <person name="Huson D.H."/>
            <person name="Kravitz S.A."/>
            <person name="Mouchard L."/>
            <person name="Reinert K."/>
            <person name="Remington K.A."/>
            <person name="Clark A.G."/>
            <person name="Waterman M.S."/>
            <person name="Eichler E.E."/>
            <person name="Adams M.D."/>
            <person name="Hunkapiller M.W."/>
            <person name="Myers E.W."/>
            <person name="Venter J.C."/>
        </authorList>
    </citation>
    <scope>NUCLEOTIDE SEQUENCE [LARGE SCALE GENOMIC DNA]</scope>
</reference>
<reference key="8">
    <citation type="journal article" date="2004" name="Genome Res.">
        <title>The status, quality, and expansion of the NIH full-length cDNA project: the Mammalian Gene Collection (MGC).</title>
        <authorList>
            <consortium name="The MGC Project Team"/>
        </authorList>
    </citation>
    <scope>NUCLEOTIDE SEQUENCE [LARGE SCALE MRNA] (ISOFORM 1)</scope>
    <source>
        <tissue>Kidney</tissue>
    </source>
</reference>
<reference key="9">
    <citation type="journal article" date="2001" name="Nature">
        <title>Hypermutation of multiple proto-oncogenes in B-cell diffuse large-cell lymphomas.</title>
        <authorList>
            <person name="Pasqualucci L."/>
            <person name="Neumeister P."/>
            <person name="Goossens T."/>
            <person name="Nanjangud G."/>
            <person name="Chaganti R.S.K."/>
            <person name="Kuppers R."/>
            <person name="Dalla-Favera R."/>
        </authorList>
    </citation>
    <scope>NUCLEOTIDE SEQUENCE [GENOMIC DNA] OF 1-202 (ISOFORM 1)</scope>
</reference>
<reference key="10">
    <citation type="journal article" date="1988" name="Mol. Cell. Biol.">
        <title>Identification of the human pim-1 gene product as a 33-kilodalton cytoplasmic protein with tyrosine kinase activity.</title>
        <authorList>
            <person name="Telerman A."/>
            <person name="Amson R."/>
            <person name="Zakut-Houri R."/>
            <person name="Givol D."/>
        </authorList>
    </citation>
    <scope>CHARACTERIZATION</scope>
</reference>
<reference key="11">
    <citation type="journal article" date="1991" name="EMBO J.">
        <title>The pim-1 oncogene encodes two related protein-serine/threonine kinases by alternative initiation at AUG and CUG.</title>
        <authorList>
            <person name="Saris C.J."/>
            <person name="Domen J."/>
            <person name="Berns A."/>
        </authorList>
    </citation>
    <scope>FUNCTION</scope>
    <scope>ALTERNATIVE INITIATION</scope>
</reference>
<reference key="12">
    <citation type="journal article" date="2000" name="FEBS Lett.">
        <title>Identification of heterochromatin protein 1 (HP1) as a phosphorylation target by Pim-1 kinase and the effect of phosphorylation on the transcriptional repression function of HP1.</title>
        <authorList>
            <person name="Koike N."/>
            <person name="Maita H."/>
            <person name="Taira T."/>
            <person name="Ariga H."/>
            <person name="Iguchi-Ariga S.M.M."/>
        </authorList>
    </citation>
    <scope>FUNCTION IN PHOSPHORYLATION OF CBX3</scope>
</reference>
<reference key="13">
    <citation type="journal article" date="2002" name="Biochim. Biophys. Acta">
        <title>Phosphorylation of the cell cycle inhibitor p21Cip1/WAF1 by Pim-1 kinase.</title>
        <authorList>
            <person name="Wang Z."/>
            <person name="Bhattacharya N."/>
            <person name="Mixter P.F."/>
            <person name="Wei W."/>
            <person name="Sedivy J."/>
            <person name="Magnuson N.S."/>
        </authorList>
    </citation>
    <scope>SUBCELLULAR LOCATION</scope>
    <scope>FUNCTION IN PHOSPHORYLATION OF CDKN1A</scope>
</reference>
<reference key="14">
    <citation type="journal article" date="2003" name="Anticancer Res.">
        <title>Pim-1 protein kinase is nuclear in Burkitt's lymphoma: nuclear localization is necessary for its biologic effects.</title>
        <authorList>
            <person name="Ionov Y."/>
            <person name="Le X."/>
            <person name="Tunquist B.J."/>
            <person name="Sweetenham J."/>
            <person name="Sachs T."/>
            <person name="Ryder J."/>
            <person name="Johnson T."/>
            <person name="Lilly M.B."/>
            <person name="Kraft A.S."/>
        </authorList>
    </citation>
    <scope>SUBCELLULAR LOCATION</scope>
</reference>
<reference key="15">
    <citation type="journal article" date="2003" name="J. Biol. Chem.">
        <title>Protein phosphatase 2A regulates the stability of Pim protein kinases.</title>
        <authorList>
            <person name="Losman J.A."/>
            <person name="Chen X.P."/>
            <person name="Vuong B.Q."/>
            <person name="Fay S."/>
            <person name="Rothman P.B."/>
        </authorList>
    </citation>
    <scope>PHOSPHORYLATION</scope>
    <scope>UBIQUITINATION</scope>
</reference>
<reference key="16">
    <citation type="journal article" date="2004" name="J. Immunol.">
        <title>IL-5 and granulocyte-macrophage colony-stimulating factor activate STAT3 and STAT5 and promote Pim-1 and cyclin D3 protein expression in human eosinophils.</title>
        <authorList>
            <person name="Stout B.A."/>
            <person name="Bates M.E."/>
            <person name="Liu L.Y."/>
            <person name="Farrington N.N."/>
            <person name="Bertics P.J."/>
        </authorList>
    </citation>
    <scope>FUNCTION</scope>
    <scope>INDUCTION</scope>
</reference>
<reference key="17">
    <citation type="journal article" date="2005" name="Mol. Cancer Res.">
        <title>Pim-1 kinase stability is regulated by heat shock proteins and the ubiquitin-proteasome pathway.</title>
        <authorList>
            <person name="Shay K.P."/>
            <person name="Wang Z."/>
            <person name="Xing P.X."/>
            <person name="McKenzie I.F."/>
            <person name="Magnuson N.S."/>
        </authorList>
    </citation>
    <scope>UBIQUITINATION</scope>
    <scope>INTERACTION WITH HSP90AA1 AND HSP70</scope>
    <scope>INDUCTION</scope>
</reference>
<reference key="18">
    <citation type="journal article" date="2006" name="Int. J. Biochem. Cell Biol.">
        <title>The oncogenic serine/threonine kinase Pim-1 directly phosphorylates and activates the G2/M specific phosphatase Cdc25C.</title>
        <authorList>
            <person name="Bachmann M."/>
            <person name="Kosan C."/>
            <person name="Xing P.X."/>
            <person name="Montenarh M."/>
            <person name="Hoffmann I."/>
            <person name="Moroy T."/>
        </authorList>
    </citation>
    <scope>FUNCTION IN PHOSPHORYLATION OF CDC25C</scope>
    <scope>INTERACTION WITH CDC25C</scope>
</reference>
<reference key="19">
    <citation type="journal article" date="2008" name="Cancer Res.">
        <title>Pim kinases promote cell cycle progression by phosphorylating and down-regulating p27Kip1 at the transcriptional and posttranscriptional levels.</title>
        <authorList>
            <person name="Morishita D."/>
            <person name="Katayama R."/>
            <person name="Sekimizu K."/>
            <person name="Tsuruo T."/>
            <person name="Fujita N."/>
        </authorList>
    </citation>
    <scope>FUNCTION IN CELL CYCLE PROGRESSION</scope>
    <scope>PHOSPHORYLATION OF CDKN1B AND FOXO3</scope>
</reference>
<reference key="20">
    <citation type="journal article" date="2008" name="J. Biol. Chem.">
        <title>The 44-kDa Pim-1 kinase phosphorylates BCRP/ABCG2 and thereby promotes its multimerization and drug-resistant activity in human prostate cancer cells.</title>
        <authorList>
            <person name="Xie Y."/>
            <person name="Xu K."/>
            <person name="Linn D.E."/>
            <person name="Yang X."/>
            <person name="Guo Z."/>
            <person name="Shimelis H."/>
            <person name="Nakanishi T."/>
            <person name="Ross D.D."/>
            <person name="Chen H."/>
            <person name="Fazli L."/>
            <person name="Gleave M.E."/>
            <person name="Qiu Y."/>
        </authorList>
    </citation>
    <scope>FUNCTION</scope>
</reference>
<reference key="21">
    <citation type="journal article" date="2009" name="Oncogene">
        <title>PIM1 phosphorylates and negatively regulates ASK1-mediated apoptosis.</title>
        <authorList>
            <person name="Gu J.J."/>
            <person name="Wang Z."/>
            <person name="Reeves R."/>
            <person name="Magnuson N.S."/>
        </authorList>
    </citation>
    <scope>FUNCTION IN PHOSPHORYLATION OF MAP3K5</scope>
</reference>
<reference key="22">
    <citation type="journal article" date="2013" name="J. Proteome Res.">
        <title>Toward a comprehensive characterization of a human cancer cell phosphoproteome.</title>
        <authorList>
            <person name="Zhou H."/>
            <person name="Di Palma S."/>
            <person name="Preisinger C."/>
            <person name="Peng M."/>
            <person name="Polat A.N."/>
            <person name="Heck A.J."/>
            <person name="Mohammed S."/>
        </authorList>
    </citation>
    <scope>PHOSPHORYLATION [LARGE SCALE ANALYSIS] AT SER-8</scope>
    <scope>IDENTIFICATION BY MASS SPECTROMETRY [LARGE SCALE ANALYSIS]</scope>
    <source>
        <tissue>Erythroleukemia</tissue>
    </source>
</reference>
<reference key="23">
    <citation type="journal article" date="2014" name="PLoS Pathog.">
        <title>EBNA3C augments Pim-1 mediated phosphorylation and degradation of p21 to promote B-cell proliferation.</title>
        <authorList>
            <person name="Banerjee S."/>
            <person name="Lu J."/>
            <person name="Cai Q."/>
            <person name="Sun Z."/>
            <person name="Jha H.C."/>
            <person name="Robertson E.S."/>
        </authorList>
    </citation>
    <scope>INTERACTION WITH EPSTEIN-BARR VIRUS EBNA6 (MICROBIAL INFECTION)</scope>
</reference>
<reference key="24">
    <citation type="journal article" date="2019" name="Proc. Natl. Acad. Sci. U.S.A.">
        <title>Phosphorylation of DEPDC5, a component of the GATOR1 complex, releases inhibition of mTORC1 and promotes tumor growth.</title>
        <authorList>
            <person name="Padi S.K.R."/>
            <person name="Singh N."/>
            <person name="Bearss J.J."/>
            <person name="Olive V."/>
            <person name="Song J.H."/>
            <person name="Cardo-Vila M."/>
            <person name="Kraft A.S."/>
            <person name="Okumura K."/>
        </authorList>
    </citation>
    <scope>FUNCTION</scope>
    <scope>CATALYTIC ACTIVITY</scope>
</reference>
<reference key="25">
    <citation type="journal article" date="2023" name="Science">
        <title>PIM1 controls GBP1 activity to limit self-damage and to guard against pathogen infection.</title>
        <authorList>
            <person name="Fisch D."/>
            <person name="Pfleiderer M.M."/>
            <person name="Anastasakou E."/>
            <person name="Mackie G.M."/>
            <person name="Wendt F."/>
            <person name="Liu X."/>
            <person name="Clough B."/>
            <person name="Lara-Reyna S."/>
            <person name="Encheva V."/>
            <person name="Snijders A.P."/>
            <person name="Bando H."/>
            <person name="Yamamoto M."/>
            <person name="Beggs A.D."/>
            <person name="Mercer J."/>
            <person name="Shenoy A.R."/>
            <person name="Wollscheid B."/>
            <person name="Maslowski K.M."/>
            <person name="Galej W.P."/>
            <person name="Frickel E.M."/>
        </authorList>
    </citation>
    <scope>FUNCTION</scope>
    <scope>CATALYTIC ACTIVITY</scope>
    <scope>INDUCTION</scope>
    <scope>MUTAGENESIS OF PRO-81</scope>
</reference>
<reference key="26">
    <citation type="journal article" date="2005" name="J. Biol. Chem.">
        <title>Pim-1 ligand-bound structures reveal the mechanism of serine/threonine kinase inhibition by LY294002.</title>
        <authorList>
            <person name="Jacobs M.D."/>
            <person name="Black J."/>
            <person name="Futer O."/>
            <person name="Swenson L."/>
            <person name="Hare B."/>
            <person name="Fleming M."/>
            <person name="Saxena K."/>
        </authorList>
    </citation>
    <scope>X-RAY CRYSTALLOGRAPHY (2.15 ANGSTROMS) OF 33-305 IN COMPLEXES WITH ADENOSINE AND INHIBITORS STAUROSPORINE AND LY294002</scope>
    <scope>CATALYTIC ACTIVITY</scope>
    <scope>COFACTOR</scope>
    <scope>ACTIVITY REGULATION</scope>
    <scope>IDENTIFICATION BY MASS SPECTROMETRY</scope>
    <scope>PHOSPHORYLATION AT SER-8; THR-23; SER-98 AND SER-261</scope>
</reference>
<reference key="27">
    <citation type="journal article" date="2005" name="J. Biol. Chem.">
        <title>Structural basis of constitutive activity and a unique nucleotide binding mode of human Pim-1 kinase.</title>
        <authorList>
            <person name="Qian K.C."/>
            <person name="Wang L."/>
            <person name="Hickey E.R."/>
            <person name="Studts J."/>
            <person name="Barringer K."/>
            <person name="Peng C."/>
            <person name="Kronkaitis A."/>
            <person name="Li J."/>
            <person name="White A."/>
            <person name="Mische S."/>
            <person name="Farmer B."/>
        </authorList>
    </citation>
    <scope>X-RAY CRYSTALLOGRAPHY (2.10 ANGSTROMS) OF 14-313 OF APOPROTEIN AND IN COMPLEX WITH AMP-PNP</scope>
    <scope>CATALYTIC ACTIVITY</scope>
    <scope>COFACTOR</scope>
    <scope>ACTIVITY REGULATION</scope>
</reference>
<reference key="28">
    <citation type="journal article" date="2005" name="J. Mol. Biol.">
        <title>Crystal structures of proto-oncogene kinase Pim1: a target of aberrant somatic hypermutations in diffuse large cell lymphoma.</title>
        <authorList>
            <person name="Kumar A."/>
            <person name="Mandiyan V."/>
            <person name="Suzuki Y."/>
            <person name="Zhang C."/>
            <person name="Rice J."/>
            <person name="Tsai J."/>
            <person name="Artis D.R."/>
            <person name="Ibrahim P."/>
            <person name="Bremer R."/>
        </authorList>
    </citation>
    <scope>X-RAY CRYSTALLOGRAPHY (2.00 ANGSTROMS) OF 29-313 OF APOPROTEIN AND IN COMPLEXES WITH AMP-PNP AND INHIBITORS</scope>
    <scope>PARTIAL PROTEIN SEQUENCE</scope>
    <scope>CATALYTIC ACTIVITY</scope>
    <scope>ACTIVITY REGULATION</scope>
    <scope>COFACTOR</scope>
    <scope>MUTAGENESIS OF HIS-68; PRO-81; ASN-82 AND LEU-193</scope>
</reference>
<reference key="29">
    <citation type="journal article" date="2007" name="Nature">
        <title>Patterns of somatic mutation in human cancer genomes.</title>
        <authorList>
            <person name="Greenman C."/>
            <person name="Stephens P."/>
            <person name="Smith R."/>
            <person name="Dalgliesh G.L."/>
            <person name="Hunter C."/>
            <person name="Bignell G."/>
            <person name="Davies H."/>
            <person name="Teague J."/>
            <person name="Butler A."/>
            <person name="Stevens C."/>
            <person name="Edkins S."/>
            <person name="O'Meara S."/>
            <person name="Vastrik I."/>
            <person name="Schmidt E.E."/>
            <person name="Avis T."/>
            <person name="Barthorpe S."/>
            <person name="Bhamra G."/>
            <person name="Buck G."/>
            <person name="Choudhury B."/>
            <person name="Clements J."/>
            <person name="Cole J."/>
            <person name="Dicks E."/>
            <person name="Forbes S."/>
            <person name="Gray K."/>
            <person name="Halliday K."/>
            <person name="Harrison R."/>
            <person name="Hills K."/>
            <person name="Hinton J."/>
            <person name="Jenkinson A."/>
            <person name="Jones D."/>
            <person name="Menzies A."/>
            <person name="Mironenko T."/>
            <person name="Perry J."/>
            <person name="Raine K."/>
            <person name="Richardson D."/>
            <person name="Shepherd R."/>
            <person name="Small A."/>
            <person name="Tofts C."/>
            <person name="Varian J."/>
            <person name="Webb T."/>
            <person name="West S."/>
            <person name="Widaa S."/>
            <person name="Yates A."/>
            <person name="Cahill D.P."/>
            <person name="Louis D.N."/>
            <person name="Goldstraw P."/>
            <person name="Nicholson A.G."/>
            <person name="Brasseur F."/>
            <person name="Looijenga L."/>
            <person name="Weber B.L."/>
            <person name="Chiew Y.-E."/>
            <person name="DeFazio A."/>
            <person name="Greaves M.F."/>
            <person name="Green A.R."/>
            <person name="Campbell P."/>
            <person name="Birney E."/>
            <person name="Easton D.F."/>
            <person name="Chenevix-Trench G."/>
            <person name="Tan M.-H."/>
            <person name="Khoo S.K."/>
            <person name="Teh B.T."/>
            <person name="Yuen S.T."/>
            <person name="Leung S.Y."/>
            <person name="Wooster R."/>
            <person name="Futreal P.A."/>
            <person name="Stratton M.R."/>
        </authorList>
    </citation>
    <scope>VARIANTS [LARGE SCALE ANALYSIS] HIS-53; GLN-124; LYS-135 AND ASP-142</scope>
</reference>
<sequence>MLLSKINSLAHLRAAPCNDLHATKLAPGKEKEPLESQYQVGPLLGSGGFGSVYSGIRVSDNLPVAIKHVEKDRISDWGELPNGTRVPMEVVLLKKVSSGFSGVIRLLDWFERPDSFVLILERPEPVQDLFDFITERGALQEELARSFFWQVLEAVRHCHNCGVLHRDIKDENILIDLNRGELKLIDFGSGALLKDTVYTDFDGTRVYSPPEWIRYHRYHGRSAAVWSLGILLYDMVCGDIPFEHDEEIIRGQVFFRQRVSSECQHLIRWCLALRPSDRPTFEEIQNHPWMQDVLLPQETAEIHLHSLSPGPSK</sequence>
<accession>P11309</accession>
<accession>Q38RT9</accession>
<accession>Q5T7H7</accession>
<accession>Q96RG3</accession>
<comment type="function">
    <text evidence="1 4 5 8 13 15 16 17 18 20 21">Proto-oncogene with serine/threonine kinase activity involved in cell survival and cell proliferation and thus providing a selective advantage in tumorigenesis (PubMed:15528381, PubMed:1825810, PubMed:31548394). Exerts its oncogenic activity through: the regulation of MYC transcriptional activity, the regulation of cell cycle progression and by phosphorylation and inhibition of proapoptotic proteins (BAD, MAP3K5, FOXO3) (PubMed:18593906). Phosphorylation of MYC leads to an increase of MYC protein stability and thereby an increase of transcriptional activity (By similarity). The stabilization of MYC exerted by PIM1 might explain partly the strong synergism between these two oncogenes in tumorigenesis (By similarity). Mediates survival signaling through phosphorylation of BAD, which induces release of the anti-apoptotic protein Bcl-X(L)/BCL2L1 (By similarity). Phosphorylation of MAP3K5, another proapoptotic protein, by PIM1, significantly decreases MAP3K5 kinase activity and inhibits MAP3K5-mediated phosphorylation of JNK and JNK/p38MAPK subsequently reducing caspase-3 activation and cell apoptosis (PubMed:19749799). Stimulates cell cycle progression at the G1-S and G2-M transitions by phosphorylation of CDC25A and CDC25C (PubMed:16356754). Phosphorylation of CDKN1A, a regulator of cell cycle progression at G1, results in the relocation of CDKN1A to the cytoplasm and enhanced CDKN1A protein stability (PubMed:12431783). Promotes cell cycle progression and tumorigenesis by down-regulating expression of a regulator of cell cycle progression, CDKN1B, at both transcriptional and post-translational levels (PubMed:18593906). Phosphorylation of CDKN1B, induces 14-3-3 proteins binding, nuclear export and proteasome-dependent degradation (PubMed:18593906). May affect the structure or silencing of chromatin by phosphorylating HP1 gamma/CBX3 (PubMed:10664448). Also acts as a regulator of homing and migration of bone marrow cells involving functional interaction with the CXCL12-CXCR4 signaling axis (By similarity). Acts as a positive regulator of mTORC1 signaling by mediating phosphorylation and inhibition of DEPDC5 component of the GATOR1 complex (PubMed:31548394). Acts as a negative regulator of innate immunity by mediating phosphorylation and inactivation of GBP1 in absence of infection: phosphorylation of GBP1 induces interaction with 14-3-3 protein sigma (SFN) and retention in the cytosol (PubMed:37797010). Also phosphorylates and activates the ATP-binding cassette transporter ABCG2, allowing resistance to drugs through their excretion from cells (PubMed:18056989). Promotes brown adipocyte differentiation (By similarity).</text>
</comment>
<comment type="catalytic activity">
    <reaction evidence="7 9 11 20 21">
        <text>L-seryl-[protein] + ATP = O-phospho-L-seryl-[protein] + ADP + H(+)</text>
        <dbReference type="Rhea" id="RHEA:17989"/>
        <dbReference type="Rhea" id="RHEA-COMP:9863"/>
        <dbReference type="Rhea" id="RHEA-COMP:11604"/>
        <dbReference type="ChEBI" id="CHEBI:15378"/>
        <dbReference type="ChEBI" id="CHEBI:29999"/>
        <dbReference type="ChEBI" id="CHEBI:30616"/>
        <dbReference type="ChEBI" id="CHEBI:83421"/>
        <dbReference type="ChEBI" id="CHEBI:456216"/>
        <dbReference type="EC" id="2.7.11.1"/>
    </reaction>
</comment>
<comment type="catalytic activity">
    <reaction evidence="7 9 11 21">
        <text>L-threonyl-[protein] + ATP = O-phospho-L-threonyl-[protein] + ADP + H(+)</text>
        <dbReference type="Rhea" id="RHEA:46608"/>
        <dbReference type="Rhea" id="RHEA-COMP:11060"/>
        <dbReference type="Rhea" id="RHEA-COMP:11605"/>
        <dbReference type="ChEBI" id="CHEBI:15378"/>
        <dbReference type="ChEBI" id="CHEBI:30013"/>
        <dbReference type="ChEBI" id="CHEBI:30616"/>
        <dbReference type="ChEBI" id="CHEBI:61977"/>
        <dbReference type="ChEBI" id="CHEBI:456216"/>
        <dbReference type="EC" id="2.7.11.1"/>
    </reaction>
</comment>
<comment type="cofactor">
    <cofactor evidence="7 9 11">
        <name>Mg(2+)</name>
        <dbReference type="ChEBI" id="CHEBI:18420"/>
    </cofactor>
</comment>
<comment type="subunit">
    <text evidence="1 10">Interacts with RP9 (By similarity). Interacts with HSP90AA1, this interaction stabilizes PIM1 protein levels (PubMed:15798097). Interacts (ubiquitinated form) with HSP70 and promotes its proteasomal degradation (PubMed:15798097).</text>
</comment>
<comment type="subunit">
    <molecule>Isoform 1</molecule>
    <text evidence="1">Isoform 1 is isolated as a monomer whereas isoform 2 complexes with other proteins.</text>
</comment>
<comment type="subunit">
    <molecule>Isoform 2</molecule>
    <text evidence="12">Isoform 2, but not isoform 1, binds BMX.</text>
</comment>
<comment type="subunit">
    <text evidence="19">(Microbial infection) Interacts with Epstein-Barr virus EBNA6; this interaction upregulates and stabilizes PIM1 and induces cell proliferation by inhibiting the growth suppressive properties of p21.</text>
</comment>
<comment type="interaction">
    <interactant intactId="EBI-696621">
        <id>P11309</id>
    </interactant>
    <interactant intactId="EBI-744695">
        <id>Q8N9N5</id>
        <label>BANP</label>
    </interactant>
    <organismsDiffer>false</organismsDiffer>
    <experiments>3</experiments>
</comment>
<comment type="interaction">
    <interactant intactId="EBI-696621">
        <id>P11309</id>
    </interactant>
    <interactant intactId="EBI-10181188">
        <id>Q8N7W2-2</id>
        <label>BEND7</label>
    </interactant>
    <organismsDiffer>false</organismsDiffer>
    <experiments>3</experiments>
</comment>
<comment type="interaction">
    <interactant intactId="EBI-696621">
        <id>P11309</id>
    </interactant>
    <interactant intactId="EBI-696657">
        <id>P51813</id>
        <label>BMX</label>
    </interactant>
    <organismsDiffer>false</organismsDiffer>
    <experiments>2</experiments>
</comment>
<comment type="interaction">
    <interactant intactId="EBI-696621">
        <id>P11309</id>
    </interactant>
    <interactant intactId="EBI-1050358">
        <id>P07954</id>
        <label>FH</label>
    </interactant>
    <organismsDiffer>false</organismsDiffer>
    <experiments>3</experiments>
</comment>
<comment type="interaction">
    <interactant intactId="EBI-696621">
        <id>P11309</id>
    </interactant>
    <interactant intactId="EBI-740459">
        <id>P51116</id>
        <label>FXR2</label>
    </interactant>
    <organismsDiffer>false</organismsDiffer>
    <experiments>3</experiments>
</comment>
<comment type="interaction">
    <interactant intactId="EBI-696621">
        <id>P11309</id>
    </interactant>
    <interactant intactId="EBI-5460660">
        <id>Q96MH2</id>
        <label>HEXIM2</label>
    </interactant>
    <organismsDiffer>false</organismsDiffer>
    <experiments>3</experiments>
</comment>
<comment type="interaction">
    <interactant intactId="EBI-696621">
        <id>P11309</id>
    </interactant>
    <interactant intactId="EBI-10197511">
        <id>Q5T203</id>
        <label>NHLH1</label>
    </interactant>
    <organismsDiffer>false</organismsDiffer>
    <experiments>3</experiments>
</comment>
<comment type="interaction">
    <interactant intactId="EBI-696621">
        <id>P11309</id>
    </interactant>
    <interactant intactId="EBI-354451">
        <id>P39019</id>
        <label>RPS19</label>
    </interactant>
    <organismsDiffer>false</organismsDiffer>
    <experiments>7</experiments>
</comment>
<comment type="interaction">
    <interactant intactId="EBI-696621">
        <id>P11309</id>
    </interactant>
    <interactant intactId="EBI-10178002">
        <id>P0C1Z6-2</id>
        <label>TFPT</label>
    </interactant>
    <organismsDiffer>false</organismsDiffer>
    <experiments>3</experiments>
</comment>
<comment type="interaction">
    <interactant intactId="EBI-696621">
        <id>P11309</id>
    </interactant>
    <interactant intactId="EBI-2682961">
        <id>Q9Y2K1</id>
        <label>ZBTB1</label>
    </interactant>
    <organismsDiffer>false</organismsDiffer>
    <experiments>3</experiments>
</comment>
<comment type="interaction">
    <interactant intactId="EBI-1018629">
        <id>P11309-1</id>
    </interactant>
    <interactant intactId="EBI-519280">
        <id>P46527</id>
        <label>CDKN1B</label>
    </interactant>
    <organismsDiffer>false</organismsDiffer>
    <experiments>2</experiments>
</comment>
<comment type="interaction">
    <interactant intactId="EBI-1018629">
        <id>P11309-1</id>
    </interactant>
    <interactant intactId="EBI-1644164">
        <id>O43524</id>
        <label>FOXO3</label>
    </interactant>
    <organismsDiffer>false</organismsDiffer>
    <experiments>2</experiments>
</comment>
<comment type="interaction">
    <interactant intactId="EBI-1018629">
        <id>P11309-1</id>
    </interactant>
    <interactant intactId="EBI-9695448">
        <id>Q9BZS1-1</id>
        <label>FOXP3</label>
    </interactant>
    <organismsDiffer>false</organismsDiffer>
    <experiments>3</experiments>
</comment>
<comment type="interaction">
    <interactant intactId="EBI-1018633">
        <id>P11309-2</id>
    </interactant>
    <interactant intactId="EBI-1569435">
        <id>Q9UNQ0</id>
        <label>ABCG2</label>
    </interactant>
    <organismsDiffer>false</organismsDiffer>
    <experiments>5</experiments>
</comment>
<comment type="interaction">
    <interactant intactId="EBI-1018633">
        <id>P11309-2</id>
    </interactant>
    <interactant intactId="EBI-696657">
        <id>P51813</id>
        <label>BMX</label>
    </interactant>
    <organismsDiffer>false</organismsDiffer>
    <experiments>6</experiments>
</comment>
<comment type="interaction">
    <interactant intactId="EBI-1018633">
        <id>P11309-2</id>
    </interactant>
    <interactant intactId="EBI-1383528">
        <id>P17252</id>
        <label>PRKCA</label>
    </interactant>
    <organismsDiffer>false</organismsDiffer>
    <experiments>2</experiments>
</comment>
<comment type="subcellular location">
    <molecule>Isoform 1</molecule>
    <subcellularLocation>
        <location>Cytoplasm</location>
    </subcellularLocation>
    <subcellularLocation>
        <location>Nucleus</location>
    </subcellularLocation>
</comment>
<comment type="subcellular location">
    <molecule>Isoform 2</molecule>
    <subcellularLocation>
        <location>Cell membrane</location>
    </subcellularLocation>
</comment>
<comment type="alternative products">
    <event type="alternative initiation"/>
    <isoform>
        <id>P11309-1</id>
        <name>1</name>
        <name evidence="23">Pim-1</name>
        <sequence type="displayed"/>
    </isoform>
    <isoform>
        <id>P11309-2</id>
        <name>2</name>
        <name evidence="23">Pim-1L</name>
        <sequence type="described" ref="VSP_059829"/>
    </isoform>
</comment>
<comment type="tissue specificity">
    <text evidence="12">Expressed primarily in cells of the hematopoietic and germline lineages. Isoform 1 and isoform 2 are both expressed in prostate cancer cell lines.</text>
</comment>
<comment type="induction">
    <text evidence="8 10 12 21">By interferon-gamma (IFNG) (PubMed:37797010). Strongly induced in leukocytes by the JAK/STAT pathway in response to cytokines. Induced by different cellular stresses, heat shock and cytotoxic agents (PubMed:15528381, PubMed:15798097, PubMed:16186805).</text>
</comment>
<comment type="PTM">
    <text evidence="6">Autophosphorylated on both serine/threonine and tyrosine residues. Phosphorylated. Interaction with PPP2CA promotes dephosphorylation.</text>
</comment>
<comment type="PTM">
    <text evidence="6 10">Ubiquitinated, leading to proteasomal degradation.</text>
</comment>
<comment type="miscellaneous">
    <molecule>Isoform 2</molecule>
    <text evidence="12 16">Initiates from CTG codon.</text>
</comment>
<comment type="similarity">
    <text evidence="24">Belongs to the protein kinase superfamily. CAMK Ser/Thr protein kinase family. PIM subfamily.</text>
</comment>
<comment type="online information" name="Atlas of Genetics and Cytogenetics in Oncology and Haematology">
    <link uri="https://atlasgeneticsoncology.org/gene/261/PIM1"/>
</comment>
<gene>
    <name type="primary">PIM1</name>
</gene>
<organism>
    <name type="scientific">Homo sapiens</name>
    <name type="common">Human</name>
    <dbReference type="NCBI Taxonomy" id="9606"/>
    <lineage>
        <taxon>Eukaryota</taxon>
        <taxon>Metazoa</taxon>
        <taxon>Chordata</taxon>
        <taxon>Craniata</taxon>
        <taxon>Vertebrata</taxon>
        <taxon>Euteleostomi</taxon>
        <taxon>Mammalia</taxon>
        <taxon>Eutheria</taxon>
        <taxon>Euarchontoglires</taxon>
        <taxon>Primates</taxon>
        <taxon>Haplorrhini</taxon>
        <taxon>Catarrhini</taxon>
        <taxon>Hominidae</taxon>
        <taxon>Homo</taxon>
    </lineage>
</organism>
<feature type="chain" id="PRO_0000043349" description="Serine/threonine-protein kinase pim-1">
    <location>
        <begin position="1"/>
        <end position="313"/>
    </location>
</feature>
<feature type="domain" description="Protein kinase" evidence="2">
    <location>
        <begin position="38"/>
        <end position="290"/>
    </location>
</feature>
<feature type="active site" description="Proton acceptor" evidence="2 3">
    <location>
        <position position="167"/>
    </location>
</feature>
<feature type="binding site" evidence="2">
    <location>
        <begin position="44"/>
        <end position="52"/>
    </location>
    <ligand>
        <name>ATP</name>
        <dbReference type="ChEBI" id="CHEBI:30616"/>
    </ligand>
</feature>
<feature type="binding site" evidence="25 26 27">
    <location>
        <position position="67"/>
    </location>
    <ligand>
        <name>ATP</name>
        <dbReference type="ChEBI" id="CHEBI:30616"/>
    </ligand>
</feature>
<feature type="binding site" evidence="25 26 27">
    <location>
        <position position="121"/>
    </location>
    <ligand>
        <name>ATP</name>
        <dbReference type="ChEBI" id="CHEBI:30616"/>
    </ligand>
</feature>
<feature type="binding site" evidence="25 26 27">
    <location>
        <position position="128"/>
    </location>
    <ligand>
        <name>ATP</name>
        <dbReference type="ChEBI" id="CHEBI:30616"/>
    </ligand>
</feature>
<feature type="modified residue" description="Phosphoserine" evidence="9 28">
    <location>
        <position position="8"/>
    </location>
</feature>
<feature type="modified residue" description="Phosphothreonine" evidence="9">
    <location>
        <position position="23"/>
    </location>
</feature>
<feature type="modified residue" description="Phosphoserine" evidence="9">
    <location>
        <position position="98"/>
    </location>
</feature>
<feature type="modified residue" description="Phosphoserine" evidence="9">
    <location>
        <position position="261"/>
    </location>
</feature>
<feature type="splice variant" id="VSP_059829" description="In isoform 2." evidence="22">
    <original>M</original>
    <variation>MPHEPHEPLTPPFSALPDPAGAPSRRQSRQRPQLSSDSPSAFRASRSHSRNATRSHSHSHSPRHSLRHSPGSGSCGSSSGHRPCADILEVGM</variation>
    <location>
        <position position="1"/>
    </location>
</feature>
<feature type="sequence variant" id="VAR_041004" description="In a colorectal adenocarcinoma sample; somatic mutation." evidence="14">
    <original>Y</original>
    <variation>H</variation>
    <location>
        <position position="53"/>
    </location>
</feature>
<feature type="sequence variant" id="VAR_041005" description="In dbSNP:rs35760989." evidence="14">
    <original>E</original>
    <variation>Q</variation>
    <location>
        <position position="124"/>
    </location>
</feature>
<feature type="sequence variant" id="VAR_041006" description="In dbSNP:rs200523275." evidence="14">
    <original>E</original>
    <variation>K</variation>
    <location>
        <position position="135"/>
    </location>
</feature>
<feature type="sequence variant" id="VAR_041007" description="In dbSNP:rs33989191." evidence="14">
    <original>E</original>
    <variation>D</variation>
    <location>
        <position position="142"/>
    </location>
</feature>
<feature type="mutagenesis site" description="Increased kinase activity." evidence="11">
    <original>H</original>
    <variation>Y</variation>
    <location>
        <position position="68"/>
    </location>
</feature>
<feature type="mutagenesis site" description="Abolished kinase activity." evidence="11 21">
    <original>P</original>
    <variation>S</variation>
    <location>
        <position position="81"/>
    </location>
</feature>
<feature type="mutagenesis site" description="Decreased kinase activity." evidence="11">
    <original>N</original>
    <variation>K</variation>
    <location>
        <position position="82"/>
    </location>
</feature>
<feature type="mutagenesis site" description="Decreased kinase activity." evidence="11">
    <original>L</original>
    <variation>F</variation>
    <location>
        <position position="193"/>
    </location>
</feature>
<feature type="sequence conflict" description="In Ref. 2; AAA60089." evidence="24" ref="2">
    <original>AP</original>
    <variation>RA</variation>
    <location>
        <begin position="15"/>
        <end position="16"/>
    </location>
</feature>
<feature type="turn" evidence="34">
    <location>
        <begin position="6"/>
        <end position="9"/>
    </location>
</feature>
<feature type="strand" evidence="34">
    <location>
        <begin position="10"/>
        <end position="12"/>
    </location>
</feature>
<feature type="turn" evidence="29">
    <location>
        <begin position="35"/>
        <end position="37"/>
    </location>
</feature>
<feature type="strand" evidence="29">
    <location>
        <begin position="38"/>
        <end position="43"/>
    </location>
</feature>
<feature type="strand" evidence="29">
    <location>
        <begin position="45"/>
        <end position="49"/>
    </location>
</feature>
<feature type="strand" evidence="29">
    <location>
        <begin position="51"/>
        <end position="57"/>
    </location>
</feature>
<feature type="turn" evidence="29">
    <location>
        <begin position="58"/>
        <end position="60"/>
    </location>
</feature>
<feature type="strand" evidence="29">
    <location>
        <begin position="63"/>
        <end position="70"/>
    </location>
</feature>
<feature type="helix" evidence="29">
    <location>
        <begin position="71"/>
        <end position="73"/>
    </location>
</feature>
<feature type="strand" evidence="29">
    <location>
        <begin position="77"/>
        <end position="79"/>
    </location>
</feature>
<feature type="turn" evidence="30">
    <location>
        <begin position="81"/>
        <end position="83"/>
    </location>
</feature>
<feature type="strand" evidence="29">
    <location>
        <begin position="85"/>
        <end position="87"/>
    </location>
</feature>
<feature type="helix" evidence="29">
    <location>
        <begin position="88"/>
        <end position="96"/>
    </location>
</feature>
<feature type="strand" evidence="29">
    <location>
        <begin position="98"/>
        <end position="100"/>
    </location>
</feature>
<feature type="strand" evidence="32">
    <location>
        <begin position="101"/>
        <end position="103"/>
    </location>
</feature>
<feature type="strand" evidence="29">
    <location>
        <begin position="106"/>
        <end position="111"/>
    </location>
</feature>
<feature type="strand" evidence="29">
    <location>
        <begin position="113"/>
        <end position="121"/>
    </location>
</feature>
<feature type="strand" evidence="29">
    <location>
        <begin position="124"/>
        <end position="128"/>
    </location>
</feature>
<feature type="helix" evidence="29">
    <location>
        <begin position="129"/>
        <end position="136"/>
    </location>
</feature>
<feature type="helix" evidence="29">
    <location>
        <begin position="141"/>
        <end position="160"/>
    </location>
</feature>
<feature type="helix" evidence="29">
    <location>
        <begin position="170"/>
        <end position="172"/>
    </location>
</feature>
<feature type="strand" evidence="29">
    <location>
        <begin position="173"/>
        <end position="176"/>
    </location>
</feature>
<feature type="turn" evidence="29">
    <location>
        <begin position="177"/>
        <end position="180"/>
    </location>
</feature>
<feature type="strand" evidence="29">
    <location>
        <begin position="181"/>
        <end position="184"/>
    </location>
</feature>
<feature type="helix" evidence="33">
    <location>
        <begin position="187"/>
        <end position="189"/>
    </location>
</feature>
<feature type="helix" evidence="29">
    <location>
        <begin position="205"/>
        <end position="207"/>
    </location>
</feature>
<feature type="helix" evidence="29">
    <location>
        <begin position="210"/>
        <end position="215"/>
    </location>
</feature>
<feature type="helix" evidence="29">
    <location>
        <begin position="220"/>
        <end position="237"/>
    </location>
</feature>
<feature type="helix" evidence="29">
    <location>
        <begin position="245"/>
        <end position="250"/>
    </location>
</feature>
<feature type="helix" evidence="29">
    <location>
        <begin position="261"/>
        <end position="270"/>
    </location>
</feature>
<feature type="helix" evidence="29">
    <location>
        <begin position="275"/>
        <end position="277"/>
    </location>
</feature>
<feature type="helix" evidence="29">
    <location>
        <begin position="281"/>
        <end position="285"/>
    </location>
</feature>
<feature type="helix" evidence="29">
    <location>
        <begin position="288"/>
        <end position="290"/>
    </location>
</feature>
<feature type="helix" evidence="29">
    <location>
        <begin position="296"/>
        <end position="303"/>
    </location>
</feature>
<feature type="turn" evidence="31">
    <location>
        <begin position="304"/>
        <end position="307"/>
    </location>
</feature>